<accession>Q07869</accession>
<accession>B0G0X3</accession>
<accession>Q16241</accession>
<accession>Q6I9S0</accession>
<accession>Q92486</accession>
<accession>Q92689</accession>
<accession>Q9Y3N1</accession>
<name>PPARA_HUMAN</name>
<keyword id="KW-0002">3D-structure</keyword>
<keyword id="KW-0010">Activator</keyword>
<keyword id="KW-0025">Alternative splicing</keyword>
<keyword id="KW-0090">Biological rhythms</keyword>
<keyword id="KW-0238">DNA-binding</keyword>
<keyword id="KW-0446">Lipid-binding</keyword>
<keyword id="KW-0479">Metal-binding</keyword>
<keyword id="KW-0539">Nucleus</keyword>
<keyword id="KW-1267">Proteomics identification</keyword>
<keyword id="KW-0675">Receptor</keyword>
<keyword id="KW-1185">Reference proteome</keyword>
<keyword id="KW-0804">Transcription</keyword>
<keyword id="KW-0805">Transcription regulation</keyword>
<keyword id="KW-0832">Ubl conjugation</keyword>
<keyword id="KW-0862">Zinc</keyword>
<keyword id="KW-0863">Zinc-finger</keyword>
<organism>
    <name type="scientific">Homo sapiens</name>
    <name type="common">Human</name>
    <dbReference type="NCBI Taxonomy" id="9606"/>
    <lineage>
        <taxon>Eukaryota</taxon>
        <taxon>Metazoa</taxon>
        <taxon>Chordata</taxon>
        <taxon>Craniata</taxon>
        <taxon>Vertebrata</taxon>
        <taxon>Euteleostomi</taxon>
        <taxon>Mammalia</taxon>
        <taxon>Eutheria</taxon>
        <taxon>Euarchontoglires</taxon>
        <taxon>Primates</taxon>
        <taxon>Haplorrhini</taxon>
        <taxon>Catarrhini</taxon>
        <taxon>Hominidae</taxon>
        <taxon>Homo</taxon>
    </lineage>
</organism>
<evidence type="ECO:0000250" key="1">
    <source>
        <dbReference type="UniProtKB" id="P23204"/>
    </source>
</evidence>
<evidence type="ECO:0000250" key="2">
    <source>
        <dbReference type="UniProtKB" id="P37230"/>
    </source>
</evidence>
<evidence type="ECO:0000255" key="3">
    <source>
        <dbReference type="PROSITE-ProRule" id="PRU00407"/>
    </source>
</evidence>
<evidence type="ECO:0000255" key="4">
    <source>
        <dbReference type="PROSITE-ProRule" id="PRU01189"/>
    </source>
</evidence>
<evidence type="ECO:0000269" key="5">
    <source>
    </source>
</evidence>
<evidence type="ECO:0000269" key="6">
    <source>
    </source>
</evidence>
<evidence type="ECO:0000269" key="7">
    <source>
    </source>
</evidence>
<evidence type="ECO:0000269" key="8">
    <source>
    </source>
</evidence>
<evidence type="ECO:0000269" key="9">
    <source>
    </source>
</evidence>
<evidence type="ECO:0000269" key="10">
    <source>
    </source>
</evidence>
<evidence type="ECO:0000269" key="11">
    <source>
    </source>
</evidence>
<evidence type="ECO:0000269" key="12">
    <source>
    </source>
</evidence>
<evidence type="ECO:0000269" key="13">
    <source>
    </source>
</evidence>
<evidence type="ECO:0000269" key="14">
    <source>
    </source>
</evidence>
<evidence type="ECO:0000269" key="15">
    <source>
    </source>
</evidence>
<evidence type="ECO:0000269" key="16">
    <source>
    </source>
</evidence>
<evidence type="ECO:0000269" key="17">
    <source>
    </source>
</evidence>
<evidence type="ECO:0000269" key="18">
    <source>
    </source>
</evidence>
<evidence type="ECO:0000269" key="19">
    <source>
    </source>
</evidence>
<evidence type="ECO:0000269" key="20">
    <source>
    </source>
</evidence>
<evidence type="ECO:0000269" key="21">
    <source>
    </source>
</evidence>
<evidence type="ECO:0000269" key="22">
    <source>
    </source>
</evidence>
<evidence type="ECO:0000269" key="23">
    <source>
    </source>
</evidence>
<evidence type="ECO:0000269" key="24">
    <source ref="10"/>
</evidence>
<evidence type="ECO:0000303" key="25">
    <source ref="6"/>
</evidence>
<evidence type="ECO:0000305" key="26"/>
<evidence type="ECO:0007744" key="27">
    <source>
        <dbReference type="PDB" id="1I7G"/>
    </source>
</evidence>
<evidence type="ECO:0007744" key="28">
    <source>
        <dbReference type="PDB" id="1K7L"/>
    </source>
</evidence>
<evidence type="ECO:0007744" key="29">
    <source>
        <dbReference type="PDB" id="1KKQ"/>
    </source>
</evidence>
<evidence type="ECO:0007744" key="30">
    <source>
        <dbReference type="PDB" id="2NPA"/>
    </source>
</evidence>
<evidence type="ECO:0007744" key="31">
    <source>
        <dbReference type="PDB" id="2P54"/>
    </source>
</evidence>
<evidence type="ECO:0007744" key="32">
    <source>
        <dbReference type="PDB" id="2ZNN"/>
    </source>
</evidence>
<evidence type="ECO:0007744" key="33">
    <source>
        <dbReference type="PDB" id="3ET1"/>
    </source>
</evidence>
<evidence type="ECO:0007744" key="34">
    <source>
        <dbReference type="PDB" id="3G8I"/>
    </source>
</evidence>
<evidence type="ECO:0007829" key="35">
    <source>
        <dbReference type="PDB" id="1K7L"/>
    </source>
</evidence>
<evidence type="ECO:0007829" key="36">
    <source>
        <dbReference type="PDB" id="1KKQ"/>
    </source>
</evidence>
<evidence type="ECO:0007829" key="37">
    <source>
        <dbReference type="PDB" id="6KAX"/>
    </source>
</evidence>
<evidence type="ECO:0007829" key="38">
    <source>
        <dbReference type="PDB" id="6KB3"/>
    </source>
</evidence>
<evidence type="ECO:0007829" key="39">
    <source>
        <dbReference type="PDB" id="6KYP"/>
    </source>
</evidence>
<evidence type="ECO:0007829" key="40">
    <source>
        <dbReference type="PDB" id="8HUQ"/>
    </source>
</evidence>
<comment type="function">
    <text evidence="5 16 18 19 23">Ligand-activated transcription factor. Key regulator of lipid metabolism. Activated by the endogenous ligand 1-palmitoyl-2-oleoyl-sn-glycerol-3-phosphocholine (16:0/18:1-GPC). Activated by oleylethanolamide, a naturally occurring lipid that regulates satiety. Receptor for peroxisome proliferators such as hypolipidemic drugs and fatty acids. Regulates the peroxisomal beta-oxidation pathway of fatty acids. Functions as a transcription activator for the ACOX1 and P450 genes. Transactivation activity requires heterodimerization with RXRA and is antagonized by NR2C2. May be required for the propagation of clock information to metabolic pathways regulated by PER2.</text>
</comment>
<comment type="subunit">
    <text evidence="1 2 6 7 8 9 10 11 12 13 14 15 16 22">Heterodimer; with RXRA. This heterodimerization is required for DNA binding and transactivation activity. Interacts with NCOA3 coactivator. Interacts with CITED2; the interaction stimulates its transcriptional activity. Also interacts with PPARBP in vitro. Interacts with AKAP13, LPIN1, PRDM16 and coactivator NCOA6. Interacts with ASXL1 and ASXL2. Interacts with PER2. Interacts with SIRT1; the interaction seems to be modulated by NAD(+) levels (PubMed:24043310). Interacts with CRY1 and CRY2 (By similarity). In hepatocytes, interacts with PAQR3 and HUWE1; the interactions promote PPARA poylubiquitination and HUWE1-mediated degradation (By similarity).</text>
</comment>
<comment type="interaction">
    <interactant intactId="EBI-78615">
        <id>Q07869</id>
    </interactant>
    <interactant intactId="EBI-25830928">
        <id>P02768-3</id>
        <label>ALB</label>
    </interactant>
    <organismsDiffer>false</organismsDiffer>
    <experiments>3</experiments>
</comment>
<comment type="interaction">
    <interactant intactId="EBI-78615">
        <id>Q07869</id>
    </interactant>
    <interactant intactId="EBI-718729">
        <id>P55212</id>
        <label>CASP6</label>
    </interactant>
    <organismsDiffer>false</organismsDiffer>
    <experiments>3</experiments>
</comment>
<comment type="interaction">
    <interactant intactId="EBI-78615">
        <id>Q07869</id>
    </interactant>
    <interactant intactId="EBI-78219">
        <id>P45973</id>
        <label>CBX5</label>
    </interactant>
    <organismsDiffer>false</organismsDiffer>
    <experiments>3</experiments>
</comment>
<comment type="interaction">
    <interactant intactId="EBI-78615">
        <id>Q07869</id>
    </interactant>
    <interactant intactId="EBI-6624398">
        <id>P06307</id>
        <label>CCK</label>
    </interactant>
    <organismsDiffer>false</organismsDiffer>
    <experiments>3</experiments>
</comment>
<comment type="interaction">
    <interactant intactId="EBI-78615">
        <id>Q07869</id>
    </interactant>
    <interactant intactId="EBI-960730">
        <id>Q3L8U1-3</id>
        <label>CHD9</label>
    </interactant>
    <organismsDiffer>false</organismsDiffer>
    <experiments>2</experiments>
</comment>
<comment type="interaction">
    <interactant intactId="EBI-78615">
        <id>Q07869</id>
    </interactant>
    <interactant intactId="EBI-10976677">
        <id>G5E9A7</id>
        <label>DMWD</label>
    </interactant>
    <organismsDiffer>false</organismsDiffer>
    <experiments>3</experiments>
</comment>
<comment type="interaction">
    <interactant intactId="EBI-78615">
        <id>Q07869</id>
    </interactant>
    <interactant intactId="EBI-348399">
        <id>P22607</id>
        <label>FGFR3</label>
    </interactant>
    <organismsDiffer>false</organismsDiffer>
    <experiments>3</experiments>
</comment>
<comment type="interaction">
    <interactant intactId="EBI-78615">
        <id>Q07869</id>
    </interactant>
    <interactant intactId="EBI-401755">
        <id>P62993</id>
        <label>GRB2</label>
    </interactant>
    <organismsDiffer>false</organismsDiffer>
    <experiments>3</experiments>
</comment>
<comment type="interaction">
    <interactant intactId="EBI-78615">
        <id>Q07869</id>
    </interactant>
    <interactant intactId="EBI-8285963">
        <id>Q14957</id>
        <label>GRIN2C</label>
    </interactant>
    <organismsDiffer>false</organismsDiffer>
    <experiments>3</experiments>
</comment>
<comment type="interaction">
    <interactant intactId="EBI-78615">
        <id>Q07869</id>
    </interactant>
    <interactant intactId="EBI-351506">
        <id>P06396</id>
        <label>GSN</label>
    </interactant>
    <organismsDiffer>false</organismsDiffer>
    <experiments>3</experiments>
</comment>
<comment type="interaction">
    <interactant intactId="EBI-78615">
        <id>Q07869</id>
    </interactant>
    <interactant intactId="EBI-466029">
        <id>P42858</id>
        <label>HTT</label>
    </interactant>
    <organismsDiffer>false</organismsDiffer>
    <experiments>3</experiments>
</comment>
<comment type="interaction">
    <interactant intactId="EBI-78615">
        <id>Q07869</id>
    </interactant>
    <interactant intactId="EBI-1055254">
        <id>Q8WXH2</id>
        <label>JPH3</label>
    </interactant>
    <organismsDiffer>false</organismsDiffer>
    <experiments>3</experiments>
</comment>
<comment type="interaction">
    <interactant intactId="EBI-78615">
        <id>Q07869</id>
    </interactant>
    <interactant intactId="EBI-21591415">
        <id>P13473-2</id>
        <label>LAMP2</label>
    </interactant>
    <organismsDiffer>false</organismsDiffer>
    <experiments>3</experiments>
</comment>
<comment type="interaction">
    <interactant intactId="EBI-78615">
        <id>Q07869</id>
    </interactant>
    <interactant intactId="EBI-347233">
        <id>O75376</id>
        <label>NCOR1</label>
    </interactant>
    <organismsDiffer>false</organismsDiffer>
    <experiments>3</experiments>
</comment>
<comment type="interaction">
    <interactant intactId="EBI-78615">
        <id>Q07869</id>
    </interactant>
    <interactant intactId="EBI-781356">
        <id>Q13133</id>
        <label>NR1H3</label>
    </interactant>
    <organismsDiffer>false</organismsDiffer>
    <experiments>5</experiments>
</comment>
<comment type="interaction">
    <interactant intactId="EBI-78615">
        <id>Q07869</id>
    </interactant>
    <interactant intactId="EBI-50433196">
        <id>A0A6Q8PF08</id>
        <label>PMP22</label>
    </interactant>
    <organismsDiffer>false</organismsDiffer>
    <experiments>3</experiments>
</comment>
<comment type="interaction">
    <interactant intactId="EBI-78615">
        <id>Q07869</id>
    </interactant>
    <interactant intactId="EBI-746453">
        <id>P54725</id>
        <label>RAD23A</label>
    </interactant>
    <organismsDiffer>false</organismsDiffer>
    <experiments>3</experiments>
</comment>
<comment type="interaction">
    <interactant intactId="EBI-78615">
        <id>Q07869</id>
    </interactant>
    <interactant intactId="EBI-286642">
        <id>P62826</id>
        <label>RAN</label>
    </interactant>
    <organismsDiffer>false</organismsDiffer>
    <experiments>3</experiments>
</comment>
<comment type="interaction">
    <interactant intactId="EBI-78615">
        <id>Q07869</id>
    </interactant>
    <interactant intactId="EBI-5235340">
        <id>Q7Z699</id>
        <label>SPRED1</label>
    </interactant>
    <organismsDiffer>false</organismsDiffer>
    <experiments>3</experiments>
</comment>
<comment type="interaction">
    <interactant intactId="EBI-78615">
        <id>Q07869</id>
    </interactant>
    <interactant intactId="EBI-296151">
        <id>P37173</id>
        <label>TGFBR2</label>
    </interactant>
    <organismsDiffer>false</organismsDiffer>
    <experiments>3</experiments>
</comment>
<comment type="interaction">
    <interactant intactId="EBI-78615">
        <id>Q07869</id>
    </interactant>
    <interactant intactId="EBI-355164">
        <id>P55072</id>
        <label>VCP</label>
    </interactant>
    <organismsDiffer>false</organismsDiffer>
    <experiments>3</experiments>
</comment>
<comment type="interaction">
    <interactant intactId="EBI-21458428">
        <id>Q07869-1</id>
    </interactant>
    <interactant intactId="EBI-21458417">
        <id>P55055-1</id>
        <label>NR1H2</label>
    </interactant>
    <organismsDiffer>false</organismsDiffer>
    <experiments>2</experiments>
</comment>
<comment type="interaction">
    <interactant intactId="EBI-21458428">
        <id>Q07869-1</id>
    </interactant>
    <interactant intactId="EBI-781356">
        <id>Q13133</id>
        <label>NR1H3</label>
    </interactant>
    <organismsDiffer>false</organismsDiffer>
    <experiments>2</experiments>
</comment>
<comment type="subcellular location">
    <subcellularLocation>
        <location>Nucleus</location>
    </subcellularLocation>
</comment>
<comment type="alternative products">
    <event type="alternative splicing"/>
    <isoform>
        <id>Q07869-1</id>
        <name>1</name>
        <sequence type="displayed"/>
    </isoform>
    <isoform>
        <id>Q07869-2</id>
        <name>2</name>
        <sequence type="described" ref="VSP_047571 VSP_047572"/>
    </isoform>
</comment>
<comment type="tissue specificity">
    <text evidence="17 20 21">Skeletal muscle, liver, heart and kidney. Expressed in monocytes (PubMed:28167758).</text>
</comment>
<comment type="induction">
    <text evidence="17">Down-regulated by aging.</text>
</comment>
<comment type="PTM">
    <text evidence="1">Ubiquitinated by E3 ubiquitin-protein ligase HUWE1; leading to proteasomal degradation.</text>
</comment>
<comment type="PTM">
    <text evidence="2">Phosphorylated.</text>
</comment>
<comment type="similarity">
    <text evidence="26">Belongs to the nuclear hormone receptor family. NR1 subfamily.</text>
</comment>
<comment type="online information" name="Wikipedia">
    <link uri="https://en.wikipedia.org/wiki/Peroxisome_proliferator-activated_receptor"/>
    <text>Peroxisome proliferator-activated receptor entry</text>
</comment>
<feature type="chain" id="PRO_0000053481" description="Peroxisome proliferator-activated receptor alpha">
    <location>
        <begin position="1"/>
        <end position="468"/>
    </location>
</feature>
<feature type="domain" description="NR LBD" evidence="4">
    <location>
        <begin position="239"/>
        <end position="466"/>
    </location>
</feature>
<feature type="DNA-binding region" description="Nuclear receptor" evidence="3">
    <location>
        <begin position="99"/>
        <end position="173"/>
    </location>
</feature>
<feature type="zinc finger region" description="NR C4-type" evidence="3">
    <location>
        <begin position="102"/>
        <end position="122"/>
    </location>
</feature>
<feature type="zinc finger region" description="NR C4-type" evidence="3">
    <location>
        <begin position="139"/>
        <end position="161"/>
    </location>
</feature>
<feature type="region of interest" description="Required for heterodimerization with RXRA">
    <location>
        <begin position="304"/>
        <end position="433"/>
    </location>
</feature>
<feature type="binding site" evidence="12 33">
    <location>
        <position position="280"/>
    </location>
    <ligand>
        <name>indeglitazar</name>
        <dbReference type="ChEBI" id="CHEBI:188156"/>
        <note>agonist</note>
    </ligand>
</feature>
<feature type="binding site" evidence="12 33">
    <location>
        <position position="314"/>
    </location>
    <ligand>
        <name>indeglitazar</name>
        <dbReference type="ChEBI" id="CHEBI:188156"/>
        <note>agonist</note>
    </ligand>
</feature>
<feature type="binding site" evidence="12 33">
    <location>
        <position position="464"/>
    </location>
    <ligand>
        <name>indeglitazar</name>
        <dbReference type="ChEBI" id="CHEBI:188156"/>
        <note>agonist</note>
    </ligand>
</feature>
<feature type="site" description="Essential for heterodimerization with RXRA">
    <location>
        <position position="433"/>
    </location>
</feature>
<feature type="splice variant" id="VSP_047571" description="In isoform 2." evidence="25">
    <original>IRFG</original>
    <variation>FCHT</variation>
    <location>
        <begin position="171"/>
        <end position="174"/>
    </location>
</feature>
<feature type="splice variant" id="VSP_047572" description="In isoform 2." evidence="25">
    <location>
        <begin position="175"/>
        <end position="468"/>
    </location>
</feature>
<feature type="sequence variant" id="VAR_016110" description="In dbSNP:rs1800204.">
    <original>R</original>
    <variation>Q</variation>
    <location>
        <position position="127"/>
    </location>
</feature>
<feature type="sequence variant" id="VAR_016111" description="In dbSNP:rs1800206." evidence="24">
    <original>L</original>
    <variation>V</variation>
    <location>
        <position position="162"/>
    </location>
</feature>
<feature type="sequence variant" id="VAR_016112" description="In dbSNP:rs1800234.">
    <original>V</original>
    <variation>A</variation>
    <location>
        <position position="227"/>
    </location>
</feature>
<feature type="sequence variant" id="VAR_016113" description="In dbSNP:rs1042311." evidence="19">
    <original>A</original>
    <variation>V</variation>
    <location>
        <position position="268"/>
    </location>
</feature>
<feature type="sequence variant" id="VAR_016114" description="In dbSNP:rs1800242.">
    <original>D</original>
    <variation>N</variation>
    <location>
        <position position="304"/>
    </location>
</feature>
<feature type="sequence variant" id="VAR_050578" description="In dbSNP:rs2229245.">
    <original>G</original>
    <variation>R</variation>
    <location>
        <position position="395"/>
    </location>
</feature>
<feature type="sequence variant" id="VAR_016115" description="In dbSNP:rs1800243.">
    <original>R</original>
    <variation>T</variation>
    <location>
        <position position="409"/>
    </location>
</feature>
<feature type="mutagenesis site" description="Prevents DNA binding but no effect on heterodimerization with RXRA." evidence="18">
    <original>C</original>
    <variation>G</variation>
    <location>
        <position position="122"/>
    </location>
</feature>
<feature type="mutagenesis site" description="Reduced heterodimerization with RXRA. Reduced DNA binding." evidence="5">
    <original>D</original>
    <variation>A</variation>
    <location>
        <position position="304"/>
    </location>
</feature>
<feature type="mutagenesis site" description="Abolishes heterodimerization with RXRA. No DNA binding." evidence="5">
    <original>L</original>
    <variation>R</variation>
    <location>
        <position position="370"/>
    </location>
</feature>
<feature type="mutagenesis site" description="Abolishes heterodimerization with RXRA. No DNA binding." evidence="5">
    <original>L</original>
    <variation>R</variation>
    <location>
        <position position="391"/>
    </location>
</feature>
<feature type="mutagenesis site" description="No effect on heterodimerization with RXRA nor on DNA binding and transactivation activity." evidence="18">
    <original>L</original>
    <variation>R</variation>
    <location>
        <position position="422"/>
    </location>
</feature>
<feature type="mutagenesis site" description="No effect on heterodimerization with RXRA nor on DNA binding." evidence="5">
    <original>A</original>
    <variation>T</variation>
    <location>
        <position position="431"/>
    </location>
</feature>
<feature type="mutagenesis site" description="Abolishes heterodimerization with RXRA, DNA binding and transactivation activity." evidence="18">
    <original>L</original>
    <variation>R</variation>
    <location>
        <position position="433"/>
    </location>
</feature>
<feature type="sequence conflict" description="In Ref. 3; CAA68898." evidence="26" ref="3">
    <original>T</original>
    <variation>M</variation>
    <location>
        <position position="71"/>
    </location>
</feature>
<feature type="sequence conflict" description="In Ref. 3; CAA68898." evidence="26" ref="3">
    <original>K</original>
    <variation>M</variation>
    <location>
        <position position="123"/>
    </location>
</feature>
<feature type="sequence conflict" description="In Ref. 1; AAA36468." evidence="26" ref="1">
    <original>G</original>
    <variation>A</variation>
    <location>
        <position position="296"/>
    </location>
</feature>
<feature type="sequence conflict" description="In Ref. 3; CAA68898." evidence="26" ref="3">
    <original>V</original>
    <variation>A</variation>
    <location>
        <position position="444"/>
    </location>
</feature>
<feature type="helix" evidence="37">
    <location>
        <begin position="201"/>
        <end position="217"/>
    </location>
</feature>
<feature type="helix" evidence="37">
    <location>
        <begin position="222"/>
        <end position="230"/>
    </location>
</feature>
<feature type="strand" evidence="35">
    <location>
        <begin position="233"/>
        <end position="235"/>
    </location>
</feature>
<feature type="strand" evidence="37">
    <location>
        <begin position="239"/>
        <end position="241"/>
    </location>
</feature>
<feature type="helix" evidence="37">
    <location>
        <begin position="244"/>
        <end position="254"/>
    </location>
</feature>
<feature type="helix" evidence="37">
    <location>
        <begin position="256"/>
        <end position="259"/>
    </location>
</feature>
<feature type="helix" evidence="37">
    <location>
        <begin position="262"/>
        <end position="264"/>
    </location>
</feature>
<feature type="helix" evidence="37">
    <location>
        <begin position="268"/>
        <end position="291"/>
    </location>
</feature>
<feature type="turn" evidence="37">
    <location>
        <begin position="295"/>
        <end position="299"/>
    </location>
</feature>
<feature type="helix" evidence="37">
    <location>
        <begin position="302"/>
        <end position="321"/>
    </location>
</feature>
<feature type="helix" evidence="37">
    <location>
        <begin position="322"/>
        <end position="324"/>
    </location>
</feature>
<feature type="strand" evidence="37">
    <location>
        <begin position="329"/>
        <end position="332"/>
    </location>
</feature>
<feature type="turn" evidence="37">
    <location>
        <begin position="333"/>
        <end position="336"/>
    </location>
</feature>
<feature type="strand" evidence="37">
    <location>
        <begin position="337"/>
        <end position="340"/>
    </location>
</feature>
<feature type="helix" evidence="37">
    <location>
        <begin position="341"/>
        <end position="346"/>
    </location>
</feature>
<feature type="turn" evidence="36">
    <location>
        <begin position="348"/>
        <end position="350"/>
    </location>
</feature>
<feature type="helix" evidence="37">
    <location>
        <begin position="351"/>
        <end position="353"/>
    </location>
</feature>
<feature type="helix" evidence="37">
    <location>
        <begin position="356"/>
        <end position="367"/>
    </location>
</feature>
<feature type="helix" evidence="37">
    <location>
        <begin position="372"/>
        <end position="383"/>
    </location>
</feature>
<feature type="strand" evidence="39">
    <location>
        <begin position="388"/>
        <end position="390"/>
    </location>
</feature>
<feature type="helix" evidence="37">
    <location>
        <begin position="394"/>
        <end position="415"/>
    </location>
</feature>
<feature type="strand" evidence="39">
    <location>
        <begin position="416"/>
        <end position="418"/>
    </location>
</feature>
<feature type="helix" evidence="37">
    <location>
        <begin position="422"/>
        <end position="450"/>
    </location>
</feature>
<feature type="helix" evidence="40">
    <location>
        <begin position="452"/>
        <end position="454"/>
    </location>
</feature>
<feature type="helix" evidence="37">
    <location>
        <begin position="458"/>
        <end position="464"/>
    </location>
</feature>
<feature type="turn" evidence="38">
    <location>
        <begin position="465"/>
        <end position="467"/>
    </location>
</feature>
<gene>
    <name type="primary">PPARA</name>
    <name type="synonym">NR1C1</name>
    <name type="synonym">PPAR</name>
</gene>
<reference key="1">
    <citation type="journal article" date="1993" name="Biochemistry">
        <title>cDNA cloning, chromosomal mapping, and functional characterization of the human peroxisome proliferator activated receptor.</title>
        <authorList>
            <person name="Sher T."/>
            <person name="Yi H.F."/>
            <person name="McBride O.W."/>
            <person name="Gonzales F.J."/>
        </authorList>
    </citation>
    <scope>NUCLEOTIDE SEQUENCE [MRNA] (ISOFORM 1)</scope>
    <scope>FUNCTION</scope>
    <scope>VARIANT VAL-268</scope>
    <source>
        <tissue>Liver</tissue>
    </source>
</reference>
<reference key="2">
    <citation type="journal article" date="1994" name="J. Steroid Biochem. Mol. Biol.">
        <title>Human and rat peroxisome proliferator activated receptors (PPARs) demonstrate similar tissue distribution but different responsiveness to PPAR activators.</title>
        <authorList>
            <person name="Mukherjee R."/>
            <person name="Jow L."/>
            <person name="Noonan D."/>
            <person name="McDonnell D.P."/>
        </authorList>
    </citation>
    <scope>NUCLEOTIDE SEQUENCE [MRNA] (ISOFORM 1)</scope>
    <scope>TISSUE SPECIFICITY</scope>
    <source>
        <tissue>Liver</tissue>
    </source>
</reference>
<reference key="3">
    <citation type="journal article" date="1996" name="Ann. N. Y. Acad. Sci.">
        <title>Peroxisome proliferator-activated receptors: structures and function.</title>
        <authorList>
            <person name="Tugwood J.D."/>
            <person name="Aldridge T.C."/>
            <person name="Lambe K.G."/>
            <person name="Macdonald N."/>
            <person name="Woodyatt N.J."/>
        </authorList>
    </citation>
    <scope>NUCLEOTIDE SEQUENCE [MRNA] (ISOFORM 1)</scope>
    <scope>TISSUE SPECIFICITY</scope>
</reference>
<reference key="4">
    <citation type="journal article" date="2008" name="FEBS Lett.">
        <title>DNA-binding profiling of human hormone nuclear receptors via fluorescence correlation spectroscopy in a cell-free system.</title>
        <authorList>
            <person name="Kobayashi T."/>
            <person name="Kodani Y."/>
            <person name="Nozawa A."/>
            <person name="Endo Y."/>
            <person name="Sawasaki T."/>
        </authorList>
    </citation>
    <scope>NUCLEOTIDE SEQUENCE [MRNA] (ISOFORM 1)</scope>
</reference>
<reference key="5">
    <citation type="journal article" date="2009" name="Immunopharmacol. Immunotoxicol.">
        <title>Optimization of an enzyme-linked immunosorbent assay to screen ligand of Peroxisome proliferator-activated receptor alpha.</title>
        <authorList>
            <person name="Cho M.-C."/>
            <person name="Lee S."/>
            <person name="Choi H.S."/>
            <person name="Yang Y."/>
            <person name="Tae Hong J."/>
            <person name="Kim S.J."/>
            <person name="Yoon D.-Y."/>
        </authorList>
    </citation>
    <scope>NUCLEOTIDE SEQUENCE [MRNA] (ISOFORM 1)</scope>
</reference>
<reference key="6">
    <citation type="submission" date="2008-01" db="EMBL/GenBank/DDBJ databases">
        <title>A novel alternatively spliced peroxisome proliferator-activated receptor alpha.</title>
        <authorList>
            <person name="Jiang Y."/>
            <person name="Xie Z."/>
            <person name="Liu H."/>
            <person name="Liu M."/>
            <person name="Liu F."/>
        </authorList>
    </citation>
    <scope>NUCLEOTIDE SEQUENCE [MRNA] (ISOFORM 2)</scope>
</reference>
<reference key="7">
    <citation type="journal article" date="2004" name="Genome Biol.">
        <title>A genome annotation-driven approach to cloning the human ORFeome.</title>
        <authorList>
            <person name="Collins J.E."/>
            <person name="Wright C.L."/>
            <person name="Edwards C.A."/>
            <person name="Davis M.P."/>
            <person name="Grinham J.A."/>
            <person name="Cole C.G."/>
            <person name="Goward M.E."/>
            <person name="Aguado B."/>
            <person name="Mallya M."/>
            <person name="Mokrab Y."/>
            <person name="Huckle E.J."/>
            <person name="Beare D.M."/>
            <person name="Dunham I."/>
        </authorList>
    </citation>
    <scope>NUCLEOTIDE SEQUENCE [LARGE SCALE MRNA] (ISOFORM 1)</scope>
</reference>
<reference key="8">
    <citation type="journal article" date="2004" name="Nat. Genet.">
        <title>Complete sequencing and characterization of 21,243 full-length human cDNAs.</title>
        <authorList>
            <person name="Ota T."/>
            <person name="Suzuki Y."/>
            <person name="Nishikawa T."/>
            <person name="Otsuki T."/>
            <person name="Sugiyama T."/>
            <person name="Irie R."/>
            <person name="Wakamatsu A."/>
            <person name="Hayashi K."/>
            <person name="Sato H."/>
            <person name="Nagai K."/>
            <person name="Kimura K."/>
            <person name="Makita H."/>
            <person name="Sekine M."/>
            <person name="Obayashi M."/>
            <person name="Nishi T."/>
            <person name="Shibahara T."/>
            <person name="Tanaka T."/>
            <person name="Ishii S."/>
            <person name="Yamamoto J."/>
            <person name="Saito K."/>
            <person name="Kawai Y."/>
            <person name="Isono Y."/>
            <person name="Nakamura Y."/>
            <person name="Nagahari K."/>
            <person name="Murakami K."/>
            <person name="Yasuda T."/>
            <person name="Iwayanagi T."/>
            <person name="Wagatsuma M."/>
            <person name="Shiratori A."/>
            <person name="Sudo H."/>
            <person name="Hosoiri T."/>
            <person name="Kaku Y."/>
            <person name="Kodaira H."/>
            <person name="Kondo H."/>
            <person name="Sugawara M."/>
            <person name="Takahashi M."/>
            <person name="Kanda K."/>
            <person name="Yokoi T."/>
            <person name="Furuya T."/>
            <person name="Kikkawa E."/>
            <person name="Omura Y."/>
            <person name="Abe K."/>
            <person name="Kamihara K."/>
            <person name="Katsuta N."/>
            <person name="Sato K."/>
            <person name="Tanikawa M."/>
            <person name="Yamazaki M."/>
            <person name="Ninomiya K."/>
            <person name="Ishibashi T."/>
            <person name="Yamashita H."/>
            <person name="Murakawa K."/>
            <person name="Fujimori K."/>
            <person name="Tanai H."/>
            <person name="Kimata M."/>
            <person name="Watanabe M."/>
            <person name="Hiraoka S."/>
            <person name="Chiba Y."/>
            <person name="Ishida S."/>
            <person name="Ono Y."/>
            <person name="Takiguchi S."/>
            <person name="Watanabe S."/>
            <person name="Yosida M."/>
            <person name="Hotuta T."/>
            <person name="Kusano J."/>
            <person name="Kanehori K."/>
            <person name="Takahashi-Fujii A."/>
            <person name="Hara H."/>
            <person name="Tanase T.-O."/>
            <person name="Nomura Y."/>
            <person name="Togiya S."/>
            <person name="Komai F."/>
            <person name="Hara R."/>
            <person name="Takeuchi K."/>
            <person name="Arita M."/>
            <person name="Imose N."/>
            <person name="Musashino K."/>
            <person name="Yuuki H."/>
            <person name="Oshima A."/>
            <person name="Sasaki N."/>
            <person name="Aotsuka S."/>
            <person name="Yoshikawa Y."/>
            <person name="Matsunawa H."/>
            <person name="Ichihara T."/>
            <person name="Shiohata N."/>
            <person name="Sano S."/>
            <person name="Moriya S."/>
            <person name="Momiyama H."/>
            <person name="Satoh N."/>
            <person name="Takami S."/>
            <person name="Terashima Y."/>
            <person name="Suzuki O."/>
            <person name="Nakagawa S."/>
            <person name="Senoh A."/>
            <person name="Mizoguchi H."/>
            <person name="Goto Y."/>
            <person name="Shimizu F."/>
            <person name="Wakebe H."/>
            <person name="Hishigaki H."/>
            <person name="Watanabe T."/>
            <person name="Sugiyama A."/>
            <person name="Takemoto M."/>
            <person name="Kawakami B."/>
            <person name="Yamazaki M."/>
            <person name="Watanabe K."/>
            <person name="Kumagai A."/>
            <person name="Itakura S."/>
            <person name="Fukuzumi Y."/>
            <person name="Fujimori Y."/>
            <person name="Komiyama M."/>
            <person name="Tashiro H."/>
            <person name="Tanigami A."/>
            <person name="Fujiwara T."/>
            <person name="Ono T."/>
            <person name="Yamada K."/>
            <person name="Fujii Y."/>
            <person name="Ozaki K."/>
            <person name="Hirao M."/>
            <person name="Ohmori Y."/>
            <person name="Kawabata A."/>
            <person name="Hikiji T."/>
            <person name="Kobatake N."/>
            <person name="Inagaki H."/>
            <person name="Ikema Y."/>
            <person name="Okamoto S."/>
            <person name="Okitani R."/>
            <person name="Kawakami T."/>
            <person name="Noguchi S."/>
            <person name="Itoh T."/>
            <person name="Shigeta K."/>
            <person name="Senba T."/>
            <person name="Matsumura K."/>
            <person name="Nakajima Y."/>
            <person name="Mizuno T."/>
            <person name="Morinaga M."/>
            <person name="Sasaki M."/>
            <person name="Togashi T."/>
            <person name="Oyama M."/>
            <person name="Hata H."/>
            <person name="Watanabe M."/>
            <person name="Komatsu T."/>
            <person name="Mizushima-Sugano J."/>
            <person name="Satoh T."/>
            <person name="Shirai Y."/>
            <person name="Takahashi Y."/>
            <person name="Nakagawa K."/>
            <person name="Okumura K."/>
            <person name="Nagase T."/>
            <person name="Nomura N."/>
            <person name="Kikuchi H."/>
            <person name="Masuho Y."/>
            <person name="Yamashita R."/>
            <person name="Nakai K."/>
            <person name="Yada T."/>
            <person name="Nakamura Y."/>
            <person name="Ohara O."/>
            <person name="Isogai T."/>
            <person name="Sugano S."/>
        </authorList>
    </citation>
    <scope>NUCLEOTIDE SEQUENCE [LARGE SCALE MRNA] (ISOFORM 1)</scope>
    <source>
        <tissue>Brain</tissue>
    </source>
</reference>
<reference key="9">
    <citation type="submission" date="2004-06" db="EMBL/GenBank/DDBJ databases">
        <title>Cloning of human full open reading frames in Gateway(TM) system entry vector (pDONR201).</title>
        <authorList>
            <person name="Ebert L."/>
            <person name="Schick M."/>
            <person name="Neubert P."/>
            <person name="Schatten R."/>
            <person name="Henze S."/>
            <person name="Korn B."/>
        </authorList>
    </citation>
    <scope>NUCLEOTIDE SEQUENCE [LARGE SCALE MRNA] (ISOFORM 1)</scope>
</reference>
<reference key="10">
    <citation type="submission" date="2002-12" db="EMBL/GenBank/DDBJ databases">
        <authorList>
            <consortium name="SeattleSNPs variation discovery resource"/>
        </authorList>
    </citation>
    <scope>NUCLEOTIDE SEQUENCE [GENOMIC DNA]</scope>
    <scope>VARIANT VAL-162</scope>
</reference>
<reference key="11">
    <citation type="journal article" date="1999" name="Nature">
        <title>The DNA sequence of human chromosome 22.</title>
        <authorList>
            <person name="Dunham I."/>
            <person name="Hunt A.R."/>
            <person name="Collins J.E."/>
            <person name="Bruskiewich R."/>
            <person name="Beare D.M."/>
            <person name="Clamp M."/>
            <person name="Smink L.J."/>
            <person name="Ainscough R."/>
            <person name="Almeida J.P."/>
            <person name="Babbage A.K."/>
            <person name="Bagguley C."/>
            <person name="Bailey J."/>
            <person name="Barlow K.F."/>
            <person name="Bates K.N."/>
            <person name="Beasley O.P."/>
            <person name="Bird C.P."/>
            <person name="Blakey S.E."/>
            <person name="Bridgeman A.M."/>
            <person name="Buck D."/>
            <person name="Burgess J."/>
            <person name="Burrill W.D."/>
            <person name="Burton J."/>
            <person name="Carder C."/>
            <person name="Carter N.P."/>
            <person name="Chen Y."/>
            <person name="Clark G."/>
            <person name="Clegg S.M."/>
            <person name="Cobley V.E."/>
            <person name="Cole C.G."/>
            <person name="Collier R.E."/>
            <person name="Connor R."/>
            <person name="Conroy D."/>
            <person name="Corby N.R."/>
            <person name="Coville G.J."/>
            <person name="Cox A.V."/>
            <person name="Davis J."/>
            <person name="Dawson E."/>
            <person name="Dhami P.D."/>
            <person name="Dockree C."/>
            <person name="Dodsworth S.J."/>
            <person name="Durbin R.M."/>
            <person name="Ellington A.G."/>
            <person name="Evans K.L."/>
            <person name="Fey J.M."/>
            <person name="Fleming K."/>
            <person name="French L."/>
            <person name="Garner A.A."/>
            <person name="Gilbert J.G.R."/>
            <person name="Goward M.E."/>
            <person name="Grafham D.V."/>
            <person name="Griffiths M.N.D."/>
            <person name="Hall C."/>
            <person name="Hall R.E."/>
            <person name="Hall-Tamlyn G."/>
            <person name="Heathcott R.W."/>
            <person name="Ho S."/>
            <person name="Holmes S."/>
            <person name="Hunt S.E."/>
            <person name="Jones M.C."/>
            <person name="Kershaw J."/>
            <person name="Kimberley A.M."/>
            <person name="King A."/>
            <person name="Laird G.K."/>
            <person name="Langford C.F."/>
            <person name="Leversha M.A."/>
            <person name="Lloyd C."/>
            <person name="Lloyd D.M."/>
            <person name="Martyn I.D."/>
            <person name="Mashreghi-Mohammadi M."/>
            <person name="Matthews L.H."/>
            <person name="Mccann O.T."/>
            <person name="Mcclay J."/>
            <person name="Mclaren S."/>
            <person name="McMurray A.A."/>
            <person name="Milne S.A."/>
            <person name="Mortimore B.J."/>
            <person name="Odell C.N."/>
            <person name="Pavitt R."/>
            <person name="Pearce A.V."/>
            <person name="Pearson D."/>
            <person name="Phillimore B.J.C.T."/>
            <person name="Phillips S.H."/>
            <person name="Plumb R.W."/>
            <person name="Ramsay H."/>
            <person name="Ramsey Y."/>
            <person name="Rogers L."/>
            <person name="Ross M.T."/>
            <person name="Scott C.E."/>
            <person name="Sehra H.K."/>
            <person name="Skuce C.D."/>
            <person name="Smalley S."/>
            <person name="Smith M.L."/>
            <person name="Soderlund C."/>
            <person name="Spragon L."/>
            <person name="Steward C.A."/>
            <person name="Sulston J.E."/>
            <person name="Swann R.M."/>
            <person name="Vaudin M."/>
            <person name="Wall M."/>
            <person name="Wallis J.M."/>
            <person name="Whiteley M.N."/>
            <person name="Willey D.L."/>
            <person name="Williams L."/>
            <person name="Williams S.A."/>
            <person name="Williamson H."/>
            <person name="Wilmer T.E."/>
            <person name="Wilming L."/>
            <person name="Wright C.L."/>
            <person name="Hubbard T."/>
            <person name="Bentley D.R."/>
            <person name="Beck S."/>
            <person name="Rogers J."/>
            <person name="Shimizu N."/>
            <person name="Minoshima S."/>
            <person name="Kawasaki K."/>
            <person name="Sasaki T."/>
            <person name="Asakawa S."/>
            <person name="Kudoh J."/>
            <person name="Shintani A."/>
            <person name="Shibuya K."/>
            <person name="Yoshizaki Y."/>
            <person name="Aoki N."/>
            <person name="Mitsuyama S."/>
            <person name="Roe B.A."/>
            <person name="Chen F."/>
            <person name="Chu L."/>
            <person name="Crabtree J."/>
            <person name="Deschamps S."/>
            <person name="Do A."/>
            <person name="Do T."/>
            <person name="Dorman A."/>
            <person name="Fang F."/>
            <person name="Fu Y."/>
            <person name="Hu P."/>
            <person name="Hua A."/>
            <person name="Kenton S."/>
            <person name="Lai H."/>
            <person name="Lao H.I."/>
            <person name="Lewis J."/>
            <person name="Lewis S."/>
            <person name="Lin S.-P."/>
            <person name="Loh P."/>
            <person name="Malaj E."/>
            <person name="Nguyen T."/>
            <person name="Pan H."/>
            <person name="Phan S."/>
            <person name="Qi S."/>
            <person name="Qian Y."/>
            <person name="Ray L."/>
            <person name="Ren Q."/>
            <person name="Shaull S."/>
            <person name="Sloan D."/>
            <person name="Song L."/>
            <person name="Wang Q."/>
            <person name="Wang Y."/>
            <person name="Wang Z."/>
            <person name="White J."/>
            <person name="Willingham D."/>
            <person name="Wu H."/>
            <person name="Yao Z."/>
            <person name="Zhan M."/>
            <person name="Zhang G."/>
            <person name="Chissoe S."/>
            <person name="Murray J."/>
            <person name="Miller N."/>
            <person name="Minx P."/>
            <person name="Fulton R."/>
            <person name="Johnson D."/>
            <person name="Bemis G."/>
            <person name="Bentley D."/>
            <person name="Bradshaw H."/>
            <person name="Bourne S."/>
            <person name="Cordes M."/>
            <person name="Du Z."/>
            <person name="Fulton L."/>
            <person name="Goela D."/>
            <person name="Graves T."/>
            <person name="Hawkins J."/>
            <person name="Hinds K."/>
            <person name="Kemp K."/>
            <person name="Latreille P."/>
            <person name="Layman D."/>
            <person name="Ozersky P."/>
            <person name="Rohlfing T."/>
            <person name="Scheet P."/>
            <person name="Walker C."/>
            <person name="Wamsley A."/>
            <person name="Wohldmann P."/>
            <person name="Pepin K."/>
            <person name="Nelson J."/>
            <person name="Korf I."/>
            <person name="Bedell J.A."/>
            <person name="Hillier L.W."/>
            <person name="Mardis E."/>
            <person name="Waterston R."/>
            <person name="Wilson R."/>
            <person name="Emanuel B.S."/>
            <person name="Shaikh T."/>
            <person name="Kurahashi H."/>
            <person name="Saitta S."/>
            <person name="Budarf M.L."/>
            <person name="McDermid H.E."/>
            <person name="Johnson A."/>
            <person name="Wong A.C.C."/>
            <person name="Morrow B.E."/>
            <person name="Edelmann L."/>
            <person name="Kim U.J."/>
            <person name="Shizuya H."/>
            <person name="Simon M.I."/>
            <person name="Dumanski J.P."/>
            <person name="Peyrard M."/>
            <person name="Kedra D."/>
            <person name="Seroussi E."/>
            <person name="Fransson I."/>
            <person name="Tapia I."/>
            <person name="Bruder C.E."/>
            <person name="O'Brien K.P."/>
            <person name="Wilkinson P."/>
            <person name="Bodenteich A."/>
            <person name="Hartman K."/>
            <person name="Hu X."/>
            <person name="Khan A.S."/>
            <person name="Lane L."/>
            <person name="Tilahun Y."/>
            <person name="Wright H."/>
        </authorList>
    </citation>
    <scope>NUCLEOTIDE SEQUENCE [LARGE SCALE GENOMIC DNA]</scope>
</reference>
<reference key="12">
    <citation type="submission" date="2005-07" db="EMBL/GenBank/DDBJ databases">
        <authorList>
            <person name="Mural R.J."/>
            <person name="Istrail S."/>
            <person name="Sutton G.G."/>
            <person name="Florea L."/>
            <person name="Halpern A.L."/>
            <person name="Mobarry C.M."/>
            <person name="Lippert R."/>
            <person name="Walenz B."/>
            <person name="Shatkay H."/>
            <person name="Dew I."/>
            <person name="Miller J.R."/>
            <person name="Flanigan M.J."/>
            <person name="Edwards N.J."/>
            <person name="Bolanos R."/>
            <person name="Fasulo D."/>
            <person name="Halldorsson B.V."/>
            <person name="Hannenhalli S."/>
            <person name="Turner R."/>
            <person name="Yooseph S."/>
            <person name="Lu F."/>
            <person name="Nusskern D.R."/>
            <person name="Shue B.C."/>
            <person name="Zheng X.H."/>
            <person name="Zhong F."/>
            <person name="Delcher A.L."/>
            <person name="Huson D.H."/>
            <person name="Kravitz S.A."/>
            <person name="Mouchard L."/>
            <person name="Reinert K."/>
            <person name="Remington K.A."/>
            <person name="Clark A.G."/>
            <person name="Waterman M.S."/>
            <person name="Eichler E.E."/>
            <person name="Adams M.D."/>
            <person name="Hunkapiller M.W."/>
            <person name="Myers E.W."/>
            <person name="Venter J.C."/>
        </authorList>
    </citation>
    <scope>NUCLEOTIDE SEQUENCE [LARGE SCALE GENOMIC DNA]</scope>
</reference>
<reference key="13">
    <citation type="journal article" date="1995" name="J. Biol. Chem.">
        <title>Peroxisome proliferator-activated receptor mediates cross-talk with thyroid hormone receptor by competition for retinoid X receptor. Possible role of a leucine zipper-like heptad repeat.</title>
        <authorList>
            <person name="Juge-Aubry C.E."/>
            <person name="Gorla-Bajszczak A."/>
            <person name="Pernin A."/>
            <person name="Lemberger T."/>
            <person name="Wahli W."/>
            <person name="Burger A.G."/>
            <person name="Meier C.A."/>
        </authorList>
    </citation>
    <scope>HETERODIMERIZATION WITH RXRA</scope>
    <scope>FUNCTION</scope>
    <scope>MUTAGENESIS OF CYS-122; LEU-422 AND LEU-433</scope>
</reference>
<reference key="14">
    <citation type="journal article" date="1997" name="Proc. Natl. Acad. Sci. U.S.A.">
        <title>RAC3, a steroid/nuclear receptor-associated coactivator that is related to SRC-1 and TIF2.</title>
        <authorList>
            <person name="Li H."/>
            <person name="Gomes P.J."/>
            <person name="Chen J.D."/>
        </authorList>
    </citation>
    <scope>INTERACTION WITH NCOA3</scope>
</reference>
<reference key="15">
    <citation type="journal article" date="1998" name="J. Biol. Chem.">
        <title>Regulation of peroxisome proliferator-activated receptor alpha-induced transactivation by the nuclear orphan receptor TAK1/TR4.</title>
        <authorList>
            <person name="Yan Z.H."/>
            <person name="Karam W.G."/>
            <person name="Staudinger J.L."/>
            <person name="Medvedev A."/>
            <person name="Ghanayem B.I."/>
            <person name="Jetten A.M."/>
        </authorList>
    </citation>
    <scope>FUNCTION</scope>
</reference>
<reference key="16">
    <citation type="journal article" date="1999" name="Mol. Cell. Endocrinol.">
        <title>Conserved amino acids in the ligand-binding and tau(i) domains of the peroxisome proliferator-activated receptor alpha are necessary for heterodimerization with RXR.</title>
        <authorList>
            <person name="Gorla-Bajszczak A."/>
            <person name="Juge-Aubry C."/>
            <person name="Pernin A."/>
            <person name="Burger A.G."/>
            <person name="Meier C.A."/>
        </authorList>
    </citation>
    <scope>HETERODIMERIZATION WITH RXRA</scope>
    <scope>FUNCTION</scope>
    <scope>MUTAGENESIS OF ASP-304; LEU-370; LEU-391 AND ALA-431</scope>
</reference>
<reference key="17">
    <citation type="journal article" date="2000" name="J. Biol. Chem.">
        <title>Cloning and characterization of RAP250, a nuclear receptor coactivator.</title>
        <authorList>
            <person name="Caira F."/>
            <person name="Antonson P."/>
            <person name="Pelto-Huikko M."/>
            <person name="Treuter E."/>
            <person name="Gustafsson J.-A."/>
        </authorList>
    </citation>
    <scope>INTERACTION WITH NCOA6</scope>
</reference>
<reference key="18">
    <citation type="journal article" date="2002" name="Hepatology">
        <title>Interaction of hepatitis C virus core protein with retinoid X receptor alpha modulates its transcriptional activity.</title>
        <authorList>
            <person name="Tsutsumi T."/>
            <person name="Suzuki T."/>
            <person name="Shimoike T."/>
            <person name="Suzuki R."/>
            <person name="Moriya K."/>
            <person name="Shintani Y."/>
            <person name="Fujie H."/>
            <person name="Matsuura Y."/>
            <person name="Koike K."/>
            <person name="Miyamura T."/>
        </authorList>
    </citation>
    <scope>HETERODIMERIZATION WITH RXRA</scope>
</reference>
<reference key="19">
    <citation type="journal article" date="2003" name="Nature">
        <title>Oleylethanolamide regulates feeding and body weight through activation of the nuclear receptor PPAR-alpha.</title>
        <authorList>
            <person name="Fu J."/>
            <person name="Gaetani S."/>
            <person name="Oveisi F."/>
            <person name="Lo Verme J."/>
            <person name="Serrano A."/>
            <person name="Rodriguez De Fonseca F."/>
            <person name="Rosengarth A."/>
            <person name="Luecke H."/>
            <person name="Di Giacomo B."/>
            <person name="Tarzia G."/>
            <person name="Piomelli D."/>
        </authorList>
    </citation>
    <scope>IDENTIFICATION AS RECEPTOR FOR OLEYLETHANOLAMIDE</scope>
</reference>
<reference key="20">
    <citation type="journal article" date="2011" name="J. Biol. Chem.">
        <title>Additional sex comb-like (ASXL) proteins 1 and 2 play opposite roles in adipogenesis via reciprocal regulation of peroxisome proliferator-activated receptor {gamma}.</title>
        <authorList>
            <person name="Park U.H."/>
            <person name="Yoon S.K."/>
            <person name="Park T."/>
            <person name="Kim E.J."/>
            <person name="Um S.J."/>
        </authorList>
    </citation>
    <scope>INTERACTION WITH ASXL1 AND ASXL2</scope>
</reference>
<reference key="21">
    <citation type="journal article" date="2013" name="Mol. Cell. Biol.">
        <title>SIRT4 represses peroxisome proliferator-activated receptor alpha activity to suppress hepatic fat oxidation.</title>
        <authorList>
            <person name="Laurent G."/>
            <person name="de Boer V.C."/>
            <person name="Finley L.W."/>
            <person name="Sweeney M."/>
            <person name="Lu H."/>
            <person name="Schug T.T."/>
            <person name="Cen Y."/>
            <person name="Jeong S.M."/>
            <person name="Li X."/>
            <person name="Sauve A.A."/>
            <person name="Haigis M.C."/>
        </authorList>
    </citation>
    <scope>INTERACTION WITH SIRT1</scope>
    <scope>FUNCTION</scope>
</reference>
<reference key="22">
    <citation type="journal article" date="2017" name="Proc. Natl. Acad. Sci. U.S.A.">
        <title>MicroRNA-10a is crucial for endothelial response to different flow patterns via interaction of retinoid acid receptors and histone deacetylases.</title>
        <authorList>
            <person name="Lee D.Y."/>
            <person name="Lin T.E."/>
            <person name="Lee C.I."/>
            <person name="Zhou J."/>
            <person name="Huang Y.H."/>
            <person name="Lee P.L."/>
            <person name="Shih Y.T."/>
            <person name="Chien S."/>
            <person name="Chiu J.J."/>
        </authorList>
    </citation>
    <scope>REPRESSION BY AGING</scope>
    <scope>TISSUE SPECIFICITY</scope>
</reference>
<reference evidence="28" key="23">
    <citation type="journal article" date="2001" name="Proc. Natl. Acad. Sci. U.S.A.">
        <title>Structural determinants of ligand binding selectivity between the peroxisome proliferator-activated receptors.</title>
        <authorList>
            <person name="Xu H.E."/>
            <person name="Lambert M.H."/>
            <person name="Montana V.G."/>
            <person name="Plunket K.D."/>
            <person name="Moore L.B."/>
            <person name="Collins J.L."/>
            <person name="Oplinger J.A."/>
            <person name="Kliewer S.A."/>
            <person name="Gampe R.T. Jr."/>
            <person name="McKee D.D."/>
            <person name="Moore J.T."/>
            <person name="Willson T.M."/>
        </authorList>
    </citation>
    <scope>X-RAY CRYSTALLOGRAPHY (2.5 ANGSTROMS) OF 192-468 IN COMPLEX WITH SYNTHETIC AGONIST</scope>
</reference>
<reference evidence="27" key="24">
    <citation type="journal article" date="2001" name="Structure">
        <title>Structure of the PPARalpha and -gamma ligand binding domain in complex with AZ 242; ligand selectivity and agonist activation in the PPAR family.</title>
        <authorList>
            <person name="Cronet P."/>
            <person name="Petersen J.F.W."/>
            <person name="Folmer R."/>
            <person name="Blomberg N."/>
            <person name="Sjoeblom K."/>
            <person name="Karlsson U."/>
            <person name="Lindstedt E.-L."/>
            <person name="Bamberg K."/>
        </authorList>
    </citation>
    <scope>X-RAY CRYSTALLOGRAPHY (2.24 ANGSTROMS) OF 196-468 IN COMPLEX WITH SYNTHETIC AGONIST</scope>
</reference>
<reference evidence="29" key="25">
    <citation type="journal article" date="2002" name="Nature">
        <title>Structural basis for antagonist-mediated recruitment of nuclear co-repressors by PPARalpha.</title>
        <authorList>
            <person name="Xu H.E."/>
            <person name="Stanley T.B."/>
            <person name="Montana V.G."/>
            <person name="Lambert M.H."/>
            <person name="Shearer B.G."/>
            <person name="Cobb J.E."/>
            <person name="McKee D.D."/>
            <person name="Galardi C.M."/>
            <person name="Plunket K.D."/>
            <person name="Nolte R.T."/>
            <person name="Parks D.J."/>
            <person name="Moore J.T."/>
            <person name="Kliewer S.A."/>
            <person name="Willson T.M."/>
            <person name="Stimmel J.B."/>
        </authorList>
    </citation>
    <scope>X-RAY CRYSTALLOGRAPHY (2.5 ANGSTROMS) OF 200-468 IN COMPLEX WITH SYNTHETIC AGONIST</scope>
</reference>
<reference evidence="30" key="26">
    <citation type="journal article" date="2007" name="Bioorg. Med. Chem. Lett.">
        <title>Design and synthesis of oxime ethers of alpha-acyl-beta-phenylpropanoic acids as PPAR dual agonists.</title>
        <authorList>
            <person name="Oon Han H."/>
            <person name="Kim S.H."/>
            <person name="Kim K.-H."/>
            <person name="Hur G.-C."/>
            <person name="Joo Yim H."/>
            <person name="Chung H.-K."/>
            <person name="Ho Woo S."/>
            <person name="Dong Koo K."/>
            <person name="Lee C.-S."/>
            <person name="Sung Koh J."/>
            <person name="Kim G.T."/>
        </authorList>
    </citation>
    <scope>X-RAY CRYSTALLOGRAPHY (2.3 ANGSTROMS) OF 199-468 IN COMPLEX WITH SYNTHETIC AGONIST</scope>
</reference>
<reference evidence="31" key="27">
    <citation type="journal article" date="2007" name="J. Med. Chem.">
        <title>Substituted 2-[(4-aminomethyl)phenoxy]-2-methylpropionic acid PPARalpha agonists. 1. Discovery of a novel series of potent HDLc raising agents.</title>
        <authorList>
            <person name="Sierra M.L."/>
            <person name="Beneton V."/>
            <person name="Boullay A.-B."/>
            <person name="Boyer T."/>
            <person name="Brewster A.G."/>
            <person name="Donche F."/>
            <person name="Forest M.-C."/>
            <person name="Fouchet M.-H."/>
            <person name="Gellibert F.J."/>
            <person name="Grillot D.A."/>
            <person name="Lambert M.H."/>
            <person name="Laroze A."/>
            <person name="Le Grumelec C."/>
            <person name="Linget J.M."/>
            <person name="Montana V.G."/>
            <person name="Nguyen V.-L."/>
            <person name="Nicodeme E."/>
            <person name="Patel V."/>
            <person name="Penfornis A."/>
            <person name="Pineau O."/>
            <person name="Pohin D."/>
            <person name="Potvain F."/>
            <person name="Poulain G."/>
            <person name="Ruault C.B."/>
            <person name="Saunders M."/>
            <person name="Toum J."/>
            <person name="Xu H.E."/>
            <person name="Xu R.X."/>
            <person name="Pianetti P.M."/>
        </authorList>
    </citation>
    <scope>X-RAY CRYSTALLOGRAPHY (1.79 ANGSTROMS) OF 202-468 IN COMPLEX WITH SYNTHETIC AGONIST</scope>
</reference>
<reference evidence="32" key="28">
    <citation type="journal article" date="2009" name="Acta Crystallogr. D">
        <title>Adaptability and selectivity of human peroxisome proliferator-activated receptor (PPAR) pan agonists revealed from crystal structures.</title>
        <authorList>
            <person name="Oyama T."/>
            <person name="Toyota K."/>
            <person name="Waku T."/>
            <person name="Hirakawa Y."/>
            <person name="Nagasawa N."/>
            <person name="Kasuga J.I."/>
            <person name="Hashimoto Y."/>
            <person name="Miyachi H."/>
            <person name="Morikawa K."/>
        </authorList>
    </citation>
    <scope>X-RAY CRYSTALLOGRAPHY (2.01 ANGSTROMS) OF 200-468 IN COMPLEX WITH THE SYNTHETIC AGONIST TIPP-703</scope>
</reference>
<reference evidence="34" key="29">
    <citation type="journal article" date="2009" name="Bioorg. Med. Chem. Lett.">
        <title>Aleglitazar, a new, potent, and balanced dual PPARalpha/gamma agonist for the treatment of type II diabetes.</title>
        <authorList>
            <person name="Benardeau A."/>
            <person name="Benz J."/>
            <person name="Binggeli A."/>
            <person name="Blum D."/>
            <person name="Boehringer M."/>
            <person name="Grether U."/>
            <person name="Hilpert H."/>
            <person name="Kuhn B."/>
            <person name="Maerki H.P."/>
            <person name="Meyer M."/>
            <person name="Puentener K."/>
            <person name="Raab S."/>
            <person name="Ruf A."/>
            <person name="Schlatter D."/>
            <person name="Mohr P."/>
        </authorList>
    </citation>
    <scope>X-RAY CRYSTALLOGRAPHY (2.2 ANGSTROMS) OF 199-468 IN COMPLEX WITH ALEGLITAZAR</scope>
</reference>
<reference evidence="33" key="30">
    <citation type="journal article" date="2009" name="Proc. Natl. Acad. Sci. U.S.A.">
        <title>Scaffold-based discovery of indeglitazar, a PPAR pan-active anti-diabetic agent.</title>
        <authorList>
            <person name="Artis D.R."/>
            <person name="Lin J.J."/>
            <person name="Zhang C."/>
            <person name="Wang W."/>
            <person name="Mehra U."/>
            <person name="Perreault M."/>
            <person name="Erbe D."/>
            <person name="Krupka H.I."/>
            <person name="England B.P."/>
            <person name="Arnold J."/>
            <person name="Plotnikov A.N."/>
            <person name="Marimuthu A."/>
            <person name="Nguyen H."/>
            <person name="Will S."/>
            <person name="Signaevsky M."/>
            <person name="Kral J."/>
            <person name="Cantwell J."/>
            <person name="Settachatgull C."/>
            <person name="Yan D.S."/>
            <person name="Fong D."/>
            <person name="Oh A."/>
            <person name="Shi S."/>
            <person name="Womack P."/>
            <person name="Powell B."/>
            <person name="Habets G."/>
            <person name="West B.L."/>
            <person name="Zhang K.Y.J."/>
            <person name="Milburn M.V."/>
            <person name="Vlasuk G.P."/>
            <person name="Hirth K.P."/>
            <person name="Nolop K."/>
            <person name="Bollag G."/>
            <person name="Ibrahim P.N."/>
            <person name="Tobin J.F."/>
        </authorList>
    </citation>
    <scope>X-RAY CRYSTALLOGRAPHY (2.5 ANGSTROMS) OF 199-468 IN COMPLEX WITH INDEGLITAZAR</scope>
</reference>
<sequence length="468" mass="52225">MVDTESPLCPLSPLEAGDLESPLSEEFLQEMGNIQEISQSIGEDSSGSFGFTEYQYLGSCPGSDGSVITDTLSPASSPSSVTYPVVPGSVDESPSGALNIECRICGDKASGYHYGVHACEGCKGFFRRTIRLKLVYDKCDRSCKIQKKNRNKCQYCRFHKCLSVGMSHNAIRFGRMPRSEKAKLKAEILTCEHDIEDSETADLKSLAKRIYEAYLKNFNMNKVKARVILSGKASNNPPFVIHDMETLCMAEKTLVAKLVANGIQNKEAEVRIFHCCQCTSVETVTELTEFAKAIPGFANLDLNDQVTLLKYGVYEAIFAMLSSVMNKDGMLVAYGNGFITREFLKSLRKPFCDIMEPKFDFAMKFNALELDDSDISLFVAAIICCGDRPGLLNVGHIEKMQEGIVHVLRLHLQSNHPDDIFLFPKLLQKMADLRQLVTEHAQLVQIIKKTESDAALHPLLQEIYRDMY</sequence>
<proteinExistence type="evidence at protein level"/>
<dbReference type="EMBL" id="L02932">
    <property type="protein sequence ID" value="AAA36468.1"/>
    <property type="molecule type" value="mRNA"/>
</dbReference>
<dbReference type="EMBL" id="S74349">
    <property type="protein sequence ID" value="AAB32649.1"/>
    <property type="molecule type" value="mRNA"/>
</dbReference>
<dbReference type="EMBL" id="Y07619">
    <property type="protein sequence ID" value="CAA68898.1"/>
    <property type="molecule type" value="mRNA"/>
</dbReference>
<dbReference type="EMBL" id="AB307690">
    <property type="protein sequence ID" value="BAH02281.1"/>
    <property type="molecule type" value="mRNA"/>
</dbReference>
<dbReference type="EMBL" id="EU650667">
    <property type="protein sequence ID" value="ACD12656.1"/>
    <property type="molecule type" value="mRNA"/>
</dbReference>
<dbReference type="EMBL" id="EU395809">
    <property type="protein sequence ID" value="ABY73535.1"/>
    <property type="molecule type" value="mRNA"/>
</dbReference>
<dbReference type="EMBL" id="CR456547">
    <property type="protein sequence ID" value="CAG30433.1"/>
    <property type="molecule type" value="mRNA"/>
</dbReference>
<dbReference type="EMBL" id="AK289821">
    <property type="protein sequence ID" value="BAF82510.1"/>
    <property type="molecule type" value="mRNA"/>
</dbReference>
<dbReference type="EMBL" id="CR457435">
    <property type="protein sequence ID" value="CAG33716.1"/>
    <property type="molecule type" value="mRNA"/>
</dbReference>
<dbReference type="EMBL" id="AY206718">
    <property type="protein sequence ID" value="AAO13489.1"/>
    <property type="molecule type" value="Genomic_DNA"/>
</dbReference>
<dbReference type="EMBL" id="AL049856">
    <property type="protein sequence ID" value="CAI22450.1"/>
    <property type="molecule type" value="Genomic_DNA"/>
</dbReference>
<dbReference type="EMBL" id="AL078611">
    <property type="protein sequence ID" value="CAI22450.1"/>
    <property type="status" value="JOINED"/>
    <property type="molecule type" value="Genomic_DNA"/>
</dbReference>
<dbReference type="EMBL" id="Z94161">
    <property type="status" value="NOT_ANNOTATED_CDS"/>
    <property type="molecule type" value="Genomic_DNA"/>
</dbReference>
<dbReference type="EMBL" id="CH471138">
    <property type="protein sequence ID" value="EAW73402.1"/>
    <property type="molecule type" value="Genomic_DNA"/>
</dbReference>
<dbReference type="CCDS" id="CCDS33669.1">
    <molecule id="Q07869-1"/>
</dbReference>
<dbReference type="PIR" id="A49289">
    <property type="entry name" value="A49289"/>
</dbReference>
<dbReference type="PIR" id="I56603">
    <property type="entry name" value="I56603"/>
</dbReference>
<dbReference type="RefSeq" id="NP_001001928.1">
    <molecule id="Q07869-1"/>
    <property type="nucleotide sequence ID" value="NM_001001928.4"/>
</dbReference>
<dbReference type="RefSeq" id="NP_001001929.1">
    <molecule id="Q07869-1"/>
    <property type="nucleotide sequence ID" value="NM_001001929.3"/>
</dbReference>
<dbReference type="RefSeq" id="NP_001349801.1">
    <molecule id="Q07869-1"/>
    <property type="nucleotide sequence ID" value="NM_001362872.2"/>
</dbReference>
<dbReference type="RefSeq" id="NP_001349802.1">
    <molecule id="Q07869-1"/>
    <property type="nucleotide sequence ID" value="NM_001362873.3"/>
</dbReference>
<dbReference type="RefSeq" id="NP_001380870.1">
    <molecule id="Q07869-1"/>
    <property type="nucleotide sequence ID" value="NM_001393941.1"/>
</dbReference>
<dbReference type="RefSeq" id="NP_001380871.1">
    <molecule id="Q07869-1"/>
    <property type="nucleotide sequence ID" value="NM_001393942.1"/>
</dbReference>
<dbReference type="RefSeq" id="NP_001380872.1">
    <molecule id="Q07869-1"/>
    <property type="nucleotide sequence ID" value="NM_001393943.1"/>
</dbReference>
<dbReference type="RefSeq" id="NP_001380873.1">
    <molecule id="Q07869-1"/>
    <property type="nucleotide sequence ID" value="NM_001393944.1"/>
</dbReference>
<dbReference type="RefSeq" id="NP_001380874.1">
    <molecule id="Q07869-1"/>
    <property type="nucleotide sequence ID" value="NM_001393945.1"/>
</dbReference>
<dbReference type="RefSeq" id="NP_005027.2">
    <molecule id="Q07869-1"/>
    <property type="nucleotide sequence ID" value="NM_005036.4"/>
</dbReference>
<dbReference type="RefSeq" id="XP_005261712.1">
    <property type="nucleotide sequence ID" value="XM_005261655.3"/>
</dbReference>
<dbReference type="RefSeq" id="XP_005261713.1">
    <property type="nucleotide sequence ID" value="XM_005261656.3"/>
</dbReference>
<dbReference type="RefSeq" id="XP_006724332.1">
    <property type="nucleotide sequence ID" value="XM_006724269.3"/>
</dbReference>
<dbReference type="RefSeq" id="XP_006724333.1">
    <property type="nucleotide sequence ID" value="XM_006724270.3"/>
</dbReference>
<dbReference type="RefSeq" id="XP_011528541.1">
    <molecule id="Q07869-1"/>
    <property type="nucleotide sequence ID" value="XM_011530239.3"/>
</dbReference>
<dbReference type="RefSeq" id="XP_011528542.1">
    <molecule id="Q07869-1"/>
    <property type="nucleotide sequence ID" value="XM_011530240.3"/>
</dbReference>
<dbReference type="RefSeq" id="XP_011528543.1">
    <property type="nucleotide sequence ID" value="XM_011530241.2"/>
</dbReference>
<dbReference type="RefSeq" id="XP_011528544.1">
    <property type="nucleotide sequence ID" value="XM_011530242.2"/>
</dbReference>
<dbReference type="RefSeq" id="XP_011528545.1">
    <property type="nucleotide sequence ID" value="XM_011530243.2"/>
</dbReference>
<dbReference type="RefSeq" id="XP_047297376.1">
    <molecule id="Q07869-1"/>
    <property type="nucleotide sequence ID" value="XM_047441420.1"/>
</dbReference>
<dbReference type="RefSeq" id="XP_047297377.1">
    <molecule id="Q07869-1"/>
    <property type="nucleotide sequence ID" value="XM_047441421.1"/>
</dbReference>
<dbReference type="RefSeq" id="XP_047297378.1">
    <molecule id="Q07869-1"/>
    <property type="nucleotide sequence ID" value="XM_047441422.1"/>
</dbReference>
<dbReference type="RefSeq" id="XP_047297379.1">
    <molecule id="Q07869-1"/>
    <property type="nucleotide sequence ID" value="XM_047441423.1"/>
</dbReference>
<dbReference type="RefSeq" id="XP_047297380.1">
    <molecule id="Q07869-1"/>
    <property type="nucleotide sequence ID" value="XM_047441424.1"/>
</dbReference>
<dbReference type="RefSeq" id="XP_047297381.1">
    <molecule id="Q07869-1"/>
    <property type="nucleotide sequence ID" value="XM_047441425.1"/>
</dbReference>
<dbReference type="RefSeq" id="XP_047297382.1">
    <molecule id="Q07869-1"/>
    <property type="nucleotide sequence ID" value="XM_047441426.1"/>
</dbReference>
<dbReference type="RefSeq" id="XP_047297386.1">
    <molecule id="Q07869-2"/>
    <property type="nucleotide sequence ID" value="XM_047441430.1"/>
</dbReference>
<dbReference type="RefSeq" id="XP_054181712.1">
    <molecule id="Q07869-1"/>
    <property type="nucleotide sequence ID" value="XM_054325737.1"/>
</dbReference>
<dbReference type="RefSeq" id="XP_054181713.1">
    <molecule id="Q07869-1"/>
    <property type="nucleotide sequence ID" value="XM_054325738.1"/>
</dbReference>
<dbReference type="RefSeq" id="XP_054181714.1">
    <molecule id="Q07869-1"/>
    <property type="nucleotide sequence ID" value="XM_054325739.1"/>
</dbReference>
<dbReference type="RefSeq" id="XP_054181715.1">
    <molecule id="Q07869-1"/>
    <property type="nucleotide sequence ID" value="XM_054325740.1"/>
</dbReference>
<dbReference type="RefSeq" id="XP_054181716.1">
    <molecule id="Q07869-1"/>
    <property type="nucleotide sequence ID" value="XM_054325741.1"/>
</dbReference>
<dbReference type="RefSeq" id="XP_054181717.1">
    <molecule id="Q07869-1"/>
    <property type="nucleotide sequence ID" value="XM_054325742.1"/>
</dbReference>
<dbReference type="RefSeq" id="XP_054181718.1">
    <molecule id="Q07869-1"/>
    <property type="nucleotide sequence ID" value="XM_054325743.1"/>
</dbReference>
<dbReference type="RefSeq" id="XP_054181719.1">
    <molecule id="Q07869-1"/>
    <property type="nucleotide sequence ID" value="XM_054325744.1"/>
</dbReference>
<dbReference type="RefSeq" id="XP_054181720.1">
    <molecule id="Q07869-1"/>
    <property type="nucleotide sequence ID" value="XM_054325745.1"/>
</dbReference>
<dbReference type="RefSeq" id="XP_054181725.1">
    <molecule id="Q07869-2"/>
    <property type="nucleotide sequence ID" value="XM_054325750.1"/>
</dbReference>
<dbReference type="PDB" id="1I7G">
    <property type="method" value="X-ray"/>
    <property type="resolution" value="2.20 A"/>
    <property type="chains" value="A=196-468"/>
</dbReference>
<dbReference type="PDB" id="1K7L">
    <property type="method" value="X-ray"/>
    <property type="resolution" value="2.50 A"/>
    <property type="chains" value="A/C/E/G=192-468"/>
</dbReference>
<dbReference type="PDB" id="1KKQ">
    <property type="method" value="X-ray"/>
    <property type="resolution" value="3.00 A"/>
    <property type="chains" value="A/B/C/D=200-468"/>
</dbReference>
<dbReference type="PDB" id="2NPA">
    <property type="method" value="X-ray"/>
    <property type="resolution" value="2.30 A"/>
    <property type="chains" value="A/C=199-468"/>
</dbReference>
<dbReference type="PDB" id="2P54">
    <property type="method" value="X-ray"/>
    <property type="resolution" value="1.79 A"/>
    <property type="chains" value="A=202-468"/>
</dbReference>
<dbReference type="PDB" id="2REW">
    <property type="method" value="X-ray"/>
    <property type="resolution" value="2.35 A"/>
    <property type="chains" value="A=196-468"/>
</dbReference>
<dbReference type="PDB" id="2ZNN">
    <property type="method" value="X-ray"/>
    <property type="resolution" value="2.01 A"/>
    <property type="chains" value="A=200-468"/>
</dbReference>
<dbReference type="PDB" id="3ET1">
    <property type="method" value="X-ray"/>
    <property type="resolution" value="2.50 A"/>
    <property type="chains" value="A/B=199-468"/>
</dbReference>
<dbReference type="PDB" id="3FEI">
    <property type="method" value="X-ray"/>
    <property type="resolution" value="2.40 A"/>
    <property type="chains" value="A=202-468"/>
</dbReference>
<dbReference type="PDB" id="3G8I">
    <property type="method" value="X-ray"/>
    <property type="resolution" value="2.20 A"/>
    <property type="chains" value="A=199-468"/>
</dbReference>
<dbReference type="PDB" id="3KDT">
    <property type="method" value="X-ray"/>
    <property type="resolution" value="2.70 A"/>
    <property type="chains" value="A/B=196-468"/>
</dbReference>
<dbReference type="PDB" id="3KDU">
    <property type="method" value="X-ray"/>
    <property type="resolution" value="2.07 A"/>
    <property type="chains" value="A/B=196-468"/>
</dbReference>
<dbReference type="PDB" id="3SP6">
    <property type="method" value="X-ray"/>
    <property type="resolution" value="2.21 A"/>
    <property type="chains" value="A=196-468"/>
</dbReference>
<dbReference type="PDB" id="3VI8">
    <property type="method" value="X-ray"/>
    <property type="resolution" value="1.75 A"/>
    <property type="chains" value="A=200-468"/>
</dbReference>
<dbReference type="PDB" id="4BCR">
    <property type="method" value="X-ray"/>
    <property type="resolution" value="2.50 A"/>
    <property type="chains" value="A/B=195-468"/>
</dbReference>
<dbReference type="PDB" id="4CI4">
    <property type="method" value="X-ray"/>
    <property type="resolution" value="2.30 A"/>
    <property type="chains" value="A=195-468"/>
</dbReference>
<dbReference type="PDB" id="5AZT">
    <property type="method" value="X-ray"/>
    <property type="resolution" value="3.45 A"/>
    <property type="chains" value="A/B=201-468"/>
</dbReference>
<dbReference type="PDB" id="5HYK">
    <property type="method" value="X-ray"/>
    <property type="resolution" value="1.83 A"/>
    <property type="chains" value="A=200-468"/>
</dbReference>
<dbReference type="PDB" id="6KAX">
    <property type="method" value="X-ray"/>
    <property type="resolution" value="1.23 A"/>
    <property type="chains" value="A=200-468"/>
</dbReference>
<dbReference type="PDB" id="6KAY">
    <property type="method" value="X-ray"/>
    <property type="resolution" value="1.74 A"/>
    <property type="chains" value="A=200-468"/>
</dbReference>
<dbReference type="PDB" id="6KAZ">
    <property type="method" value="X-ray"/>
    <property type="resolution" value="1.48 A"/>
    <property type="chains" value="A=200-468"/>
</dbReference>
<dbReference type="PDB" id="6KB0">
    <property type="method" value="X-ray"/>
    <property type="resolution" value="1.35 A"/>
    <property type="chains" value="A=200-468"/>
</dbReference>
<dbReference type="PDB" id="6KB1">
    <property type="method" value="X-ray"/>
    <property type="resolution" value="1.25 A"/>
    <property type="chains" value="A=200-468"/>
</dbReference>
<dbReference type="PDB" id="6KB2">
    <property type="method" value="X-ray"/>
    <property type="resolution" value="1.95 A"/>
    <property type="chains" value="A=200-468"/>
</dbReference>
<dbReference type="PDB" id="6KB3">
    <property type="method" value="X-ray"/>
    <property type="resolution" value="1.45 A"/>
    <property type="chains" value="A=200-468"/>
</dbReference>
<dbReference type="PDB" id="6KB4">
    <property type="method" value="X-ray"/>
    <property type="resolution" value="1.42 A"/>
    <property type="chains" value="A=200-468"/>
</dbReference>
<dbReference type="PDB" id="6KB5">
    <property type="method" value="X-ray"/>
    <property type="resolution" value="1.95 A"/>
    <property type="chains" value="A=200-468"/>
</dbReference>
<dbReference type="PDB" id="6KB6">
    <property type="method" value="X-ray"/>
    <property type="resolution" value="1.43 A"/>
    <property type="chains" value="A=200-468"/>
</dbReference>
<dbReference type="PDB" id="6KB7">
    <property type="method" value="X-ray"/>
    <property type="resolution" value="2.14 A"/>
    <property type="chains" value="A=200-468"/>
</dbReference>
<dbReference type="PDB" id="6KB8">
    <property type="method" value="X-ray"/>
    <property type="resolution" value="1.47 A"/>
    <property type="chains" value="A=200-468"/>
</dbReference>
<dbReference type="PDB" id="6KB9">
    <property type="method" value="X-ray"/>
    <property type="resolution" value="1.55 A"/>
    <property type="chains" value="A=200-468"/>
</dbReference>
<dbReference type="PDB" id="6KBA">
    <property type="method" value="X-ray"/>
    <property type="resolution" value="1.82 A"/>
    <property type="chains" value="A=200-468"/>
</dbReference>
<dbReference type="PDB" id="6KXX">
    <property type="method" value="X-ray"/>
    <property type="resolution" value="1.95 A"/>
    <property type="chains" value="A=200-468"/>
</dbReference>
<dbReference type="PDB" id="6KXY">
    <property type="method" value="X-ray"/>
    <property type="resolution" value="2.00 A"/>
    <property type="chains" value="A=200-468"/>
</dbReference>
<dbReference type="PDB" id="6KYP">
    <property type="method" value="X-ray"/>
    <property type="resolution" value="2.86 A"/>
    <property type="chains" value="A/B=200-468"/>
</dbReference>
<dbReference type="PDB" id="6L36">
    <property type="method" value="X-ray"/>
    <property type="resolution" value="3.30 A"/>
    <property type="chains" value="A/B=200-468"/>
</dbReference>
<dbReference type="PDB" id="6L37">
    <property type="method" value="X-ray"/>
    <property type="resolution" value="2.91 A"/>
    <property type="chains" value="A/B=200-468"/>
</dbReference>
<dbReference type="PDB" id="6L38">
    <property type="method" value="X-ray"/>
    <property type="resolution" value="2.76 A"/>
    <property type="chains" value="A/B=200-468"/>
</dbReference>
<dbReference type="PDB" id="6L96">
    <property type="method" value="X-ray"/>
    <property type="resolution" value="3.20 A"/>
    <property type="chains" value="A/B=194-468"/>
</dbReference>
<dbReference type="PDB" id="6LX4">
    <property type="method" value="X-ray"/>
    <property type="resolution" value="2.13 A"/>
    <property type="chains" value="A/B=200-468"/>
</dbReference>
<dbReference type="PDB" id="6LX5">
    <property type="method" value="X-ray"/>
    <property type="resolution" value="1.87 A"/>
    <property type="chains" value="A/B=200-468"/>
</dbReference>
<dbReference type="PDB" id="6LX6">
    <property type="method" value="X-ray"/>
    <property type="resolution" value="1.30 A"/>
    <property type="chains" value="A=200-468"/>
</dbReference>
<dbReference type="PDB" id="6LX7">
    <property type="method" value="X-ray"/>
    <property type="resolution" value="1.41 A"/>
    <property type="chains" value="A=200-468"/>
</dbReference>
<dbReference type="PDB" id="6LX8">
    <property type="method" value="X-ray"/>
    <property type="resolution" value="1.54 A"/>
    <property type="chains" value="A=200-468"/>
</dbReference>
<dbReference type="PDB" id="6LX9">
    <property type="method" value="X-ray"/>
    <property type="resolution" value="1.40 A"/>
    <property type="chains" value="A=200-468"/>
</dbReference>
<dbReference type="PDB" id="6LXA">
    <property type="method" value="X-ray"/>
    <property type="resolution" value="1.23 A"/>
    <property type="chains" value="A=200-468"/>
</dbReference>
<dbReference type="PDB" id="6LXB">
    <property type="method" value="X-ray"/>
    <property type="resolution" value="2.36 A"/>
    <property type="chains" value="A=200-468"/>
</dbReference>
<dbReference type="PDB" id="6LXC">
    <property type="method" value="X-ray"/>
    <property type="resolution" value="2.03 A"/>
    <property type="chains" value="A=200-468"/>
</dbReference>
<dbReference type="PDB" id="7BPY">
    <property type="method" value="X-ray"/>
    <property type="resolution" value="2.09 A"/>
    <property type="chains" value="A/C=200-468"/>
</dbReference>
<dbReference type="PDB" id="7BPZ">
    <property type="method" value="X-ray"/>
    <property type="resolution" value="2.43 A"/>
    <property type="chains" value="A/C=200-468"/>
</dbReference>
<dbReference type="PDB" id="7BQ0">
    <property type="method" value="X-ray"/>
    <property type="resolution" value="1.77 A"/>
    <property type="chains" value="A/C=200-468"/>
</dbReference>
<dbReference type="PDB" id="7BQ1">
    <property type="method" value="X-ray"/>
    <property type="resolution" value="1.52 A"/>
    <property type="chains" value="A=200-468"/>
</dbReference>
<dbReference type="PDB" id="7BQ2">
    <property type="method" value="X-ray"/>
    <property type="resolution" value="1.52 A"/>
    <property type="chains" value="A=200-468"/>
</dbReference>
<dbReference type="PDB" id="7BQ3">
    <property type="method" value="X-ray"/>
    <property type="resolution" value="1.98 A"/>
    <property type="chains" value="A=200-468"/>
</dbReference>
<dbReference type="PDB" id="7BQ4">
    <property type="method" value="X-ray"/>
    <property type="resolution" value="1.62 A"/>
    <property type="chains" value="A=200-468"/>
</dbReference>
<dbReference type="PDB" id="7C6Q">
    <property type="method" value="X-ray"/>
    <property type="resolution" value="2.76 A"/>
    <property type="chains" value="A=196-468"/>
</dbReference>
<dbReference type="PDB" id="7E5F">
    <property type="method" value="X-ray"/>
    <property type="resolution" value="1.79 A"/>
    <property type="chains" value="A=200-468"/>
</dbReference>
<dbReference type="PDB" id="7E5G">
    <property type="method" value="X-ray"/>
    <property type="resolution" value="1.66 A"/>
    <property type="chains" value="A=200-468"/>
</dbReference>
<dbReference type="PDB" id="7E5H">
    <property type="method" value="X-ray"/>
    <property type="resolution" value="1.66 A"/>
    <property type="chains" value="A=200-468"/>
</dbReference>
<dbReference type="PDB" id="7E5I">
    <property type="method" value="X-ray"/>
    <property type="resolution" value="1.58 A"/>
    <property type="chains" value="A=200-468"/>
</dbReference>
<dbReference type="PDB" id="8HUK">
    <property type="method" value="X-ray"/>
    <property type="resolution" value="2.98 A"/>
    <property type="chains" value="A/C=200-468"/>
</dbReference>
<dbReference type="PDB" id="8HUN">
    <property type="method" value="X-ray"/>
    <property type="resolution" value="2.01 A"/>
    <property type="chains" value="A=200-468"/>
</dbReference>
<dbReference type="PDB" id="8HUQ">
    <property type="method" value="X-ray"/>
    <property type="resolution" value="1.65 A"/>
    <property type="chains" value="A=200-468"/>
</dbReference>
<dbReference type="PDB" id="8RCE">
    <property type="method" value="X-ray"/>
    <property type="resolution" value="3.00 A"/>
    <property type="chains" value="A=200-468"/>
</dbReference>
<dbReference type="PDBsum" id="1I7G"/>
<dbReference type="PDBsum" id="1K7L"/>
<dbReference type="PDBsum" id="1KKQ"/>
<dbReference type="PDBsum" id="2NPA"/>
<dbReference type="PDBsum" id="2P54"/>
<dbReference type="PDBsum" id="2REW"/>
<dbReference type="PDBsum" id="2ZNN"/>
<dbReference type="PDBsum" id="3ET1"/>
<dbReference type="PDBsum" id="3FEI"/>
<dbReference type="PDBsum" id="3G8I"/>
<dbReference type="PDBsum" id="3KDT"/>
<dbReference type="PDBsum" id="3KDU"/>
<dbReference type="PDBsum" id="3SP6"/>
<dbReference type="PDBsum" id="3VI8"/>
<dbReference type="PDBsum" id="4BCR"/>
<dbReference type="PDBsum" id="4CI4"/>
<dbReference type="PDBsum" id="5AZT"/>
<dbReference type="PDBsum" id="5HYK"/>
<dbReference type="PDBsum" id="6KAX"/>
<dbReference type="PDBsum" id="6KAY"/>
<dbReference type="PDBsum" id="6KAZ"/>
<dbReference type="PDBsum" id="6KB0"/>
<dbReference type="PDBsum" id="6KB1"/>
<dbReference type="PDBsum" id="6KB2"/>
<dbReference type="PDBsum" id="6KB3"/>
<dbReference type="PDBsum" id="6KB4"/>
<dbReference type="PDBsum" id="6KB5"/>
<dbReference type="PDBsum" id="6KB6"/>
<dbReference type="PDBsum" id="6KB7"/>
<dbReference type="PDBsum" id="6KB8"/>
<dbReference type="PDBsum" id="6KB9"/>
<dbReference type="PDBsum" id="6KBA"/>
<dbReference type="PDBsum" id="6KXX"/>
<dbReference type="PDBsum" id="6KXY"/>
<dbReference type="PDBsum" id="6KYP"/>
<dbReference type="PDBsum" id="6L36"/>
<dbReference type="PDBsum" id="6L37"/>
<dbReference type="PDBsum" id="6L38"/>
<dbReference type="PDBsum" id="6L96"/>
<dbReference type="PDBsum" id="6LX4"/>
<dbReference type="PDBsum" id="6LX5"/>
<dbReference type="PDBsum" id="6LX6"/>
<dbReference type="PDBsum" id="6LX7"/>
<dbReference type="PDBsum" id="6LX8"/>
<dbReference type="PDBsum" id="6LX9"/>
<dbReference type="PDBsum" id="6LXA"/>
<dbReference type="PDBsum" id="6LXB"/>
<dbReference type="PDBsum" id="6LXC"/>
<dbReference type="PDBsum" id="7BPY"/>
<dbReference type="PDBsum" id="7BPZ"/>
<dbReference type="PDBsum" id="7BQ0"/>
<dbReference type="PDBsum" id="7BQ1"/>
<dbReference type="PDBsum" id="7BQ2"/>
<dbReference type="PDBsum" id="7BQ3"/>
<dbReference type="PDBsum" id="7BQ4"/>
<dbReference type="PDBsum" id="7C6Q"/>
<dbReference type="PDBsum" id="7E5F"/>
<dbReference type="PDBsum" id="7E5G"/>
<dbReference type="PDBsum" id="7E5H"/>
<dbReference type="PDBsum" id="7E5I"/>
<dbReference type="PDBsum" id="8HUK"/>
<dbReference type="PDBsum" id="8HUN"/>
<dbReference type="PDBsum" id="8HUQ"/>
<dbReference type="PDBsum" id="8RCE"/>
<dbReference type="SMR" id="Q07869"/>
<dbReference type="BioGRID" id="111461">
    <property type="interactions" value="85"/>
</dbReference>
<dbReference type="CORUM" id="Q07869"/>
<dbReference type="DIP" id="DIP-241N"/>
<dbReference type="FunCoup" id="Q07869">
    <property type="interactions" value="2140"/>
</dbReference>
<dbReference type="IntAct" id="Q07869">
    <property type="interactions" value="38"/>
</dbReference>
<dbReference type="MINT" id="Q07869"/>
<dbReference type="STRING" id="9606.ENSP00000385523"/>
<dbReference type="BindingDB" id="Q07869"/>
<dbReference type="ChEMBL" id="CHEMBL239"/>
<dbReference type="DrugBank" id="DB08915">
    <property type="generic name" value="Aleglitazar"/>
</dbReference>
<dbReference type="DrugBank" id="DB00132">
    <property type="generic name" value="alpha-Linolenic acid"/>
</dbReference>
<dbReference type="DrugBank" id="DB01118">
    <property type="generic name" value="Amiodarone"/>
</dbReference>
<dbReference type="DrugBank" id="DB04557">
    <property type="generic name" value="Arachidonic Acid"/>
</dbReference>
<dbReference type="DrugBank" id="DB01393">
    <property type="generic name" value="Bezafibrate"/>
</dbReference>
<dbReference type="DrugBank" id="DB04519">
    <property type="generic name" value="Caprylic acid"/>
</dbReference>
<dbReference type="DrugBank" id="DB05416">
    <property type="generic name" value="Cardarine"/>
</dbReference>
<dbReference type="DrugBank" id="DB19023">
    <property type="generic name" value="Chiglitazar"/>
</dbReference>
<dbReference type="DrugBank" id="DB09064">
    <property type="generic name" value="Ciprofibrate"/>
</dbReference>
<dbReference type="DrugBank" id="DB09006">
    <property type="generic name" value="Clinofibrate"/>
</dbReference>
<dbReference type="DrugBank" id="DB00636">
    <property type="generic name" value="Clofibrate"/>
</dbReference>
<dbReference type="DrugBank" id="DB09213">
    <property type="generic name" value="Dexibuprofen"/>
</dbReference>
<dbReference type="DrugBank" id="DB03756">
    <property type="generic name" value="Doconexent"/>
</dbReference>
<dbReference type="DrugBank" id="DB05187">
    <property type="generic name" value="Elafibranor"/>
</dbReference>
<dbReference type="DrugBank" id="DB06521">
    <property type="generic name" value="Ertiprotafib"/>
</dbReference>
<dbReference type="DrugBank" id="DB01039">
    <property type="generic name" value="Fenofibrate"/>
</dbReference>
<dbReference type="DrugBank" id="DB13873">
    <property type="generic name" value="Fenofibric acid"/>
</dbReference>
<dbReference type="DrugBank" id="DB00573">
    <property type="generic name" value="Fenoprofen"/>
</dbReference>
<dbReference type="DrugBank" id="DB13961">
    <property type="generic name" value="Fish oil"/>
</dbReference>
<dbReference type="DrugBank" id="DB02266">
    <property type="generic name" value="Flufenamic acid"/>
</dbReference>
<dbReference type="DrugBank" id="DB01241">
    <property type="generic name" value="Gemfibrozil"/>
</dbReference>
<dbReference type="DrugBank" id="DB07215">
    <property type="generic name" value="GW-590735"/>
</dbReference>
<dbReference type="DrugBank" id="DB01050">
    <property type="generic name" value="Ibuprofen"/>
</dbReference>
<dbReference type="DrugBank" id="DB00159">
    <property type="generic name" value="Icosapent"/>
</dbReference>
<dbReference type="DrugBank" id="DB12511">
    <property type="generic name" value="Imiglitazar"/>
</dbReference>
<dbReference type="DrugBank" id="DB07724">
    <property type="generic name" value="Indeglitazar"/>
</dbReference>
<dbReference type="DrugBank" id="DB00328">
    <property type="generic name" value="Indomethacin"/>
</dbReference>
<dbReference type="DrugBank" id="DB12007">
    <property type="generic name" value="Isoflavone"/>
</dbReference>
<dbReference type="DrugBank" id="DB14801">
    <property type="generic name" value="Lanifibranor"/>
</dbReference>
<dbReference type="DrugBank" id="DB03017">
    <property type="generic name" value="Lauric acid"/>
</dbReference>
<dbReference type="DrugBank" id="DB12961">
    <property type="generic name" value="Leukotriene B4"/>
</dbReference>
<dbReference type="DrugBank" id="DB09198">
    <property type="generic name" value="Lobeglitazone"/>
</dbReference>
<dbReference type="DrugBank" id="DB12988">
    <property type="generic name" value="LY-518674"/>
</dbReference>
<dbReference type="DrugBank" id="DB06510">
    <property type="generic name" value="Muraglitazar"/>
</dbReference>
<dbReference type="DrugBank" id="DB08231">
    <property type="generic name" value="Myristic acid"/>
</dbReference>
<dbReference type="DrugBank" id="DB11605">
    <property type="generic name" value="Myrrh"/>
</dbReference>
<dbReference type="DrugBank" id="DB01890">
    <property type="generic name" value="N,N-Bis(3-(D-gluconamido)propyl)deoxycholamide"/>
</dbReference>
<dbReference type="DrugBank" id="DB12662">
    <property type="generic name" value="Naveglitazar"/>
</dbReference>
<dbReference type="DrugBank" id="DB04224">
    <property type="generic name" value="Oleic Acid"/>
</dbReference>
<dbReference type="DrugBank" id="DB16495">
    <property type="generic name" value="Oleic monoethanolamide"/>
</dbReference>
<dbReference type="DrugBank" id="DB11133">
    <property type="generic name" value="Omega-3 fatty acids"/>
</dbReference>
<dbReference type="DrugBank" id="DB03796">
    <property type="generic name" value="Palmitic Acid"/>
</dbReference>
<dbReference type="DrugBank" id="DB15212">
    <property type="generic name" value="Pemafibrate"/>
</dbReference>
<dbReference type="DrugBank" id="DB02746">
    <property type="generic name" value="Phthalic Acid"/>
</dbReference>
<dbReference type="DrugBank" id="DB01708">
    <property type="generic name" value="Prasterone"/>
</dbReference>
<dbReference type="DrugBank" id="DB06533">
    <property type="generic name" value="Ragaglitazar"/>
</dbReference>
<dbReference type="DrugBank" id="DB04971">
    <property type="generic name" value="Reglitazar"/>
</dbReference>
<dbReference type="DrugBank" id="DB02709">
    <property type="generic name" value="Resveratrol"/>
</dbReference>
<dbReference type="DrugBank" id="DB00412">
    <property type="generic name" value="Rosiglitazone"/>
</dbReference>
<dbReference type="DrugBank" id="DB19312">
    <property type="generic name" value="Sipoglitazar"/>
</dbReference>
<dbReference type="DrugBank" id="DB16332">
    <property type="generic name" value="Sodelglitazar"/>
</dbReference>
<dbReference type="DrugBank" id="DB09422">
    <property type="generic name" value="Soybean oil"/>
</dbReference>
<dbReference type="DrugBank" id="DB03193">
    <property type="generic name" value="Stearic acid"/>
</dbReference>
<dbReference type="DrugBank" id="DB06536">
    <property type="generic name" value="Tesaglitazar"/>
</dbReference>
<dbReference type="DrugBank" id="DB00197">
    <property type="generic name" value="Troglitazone"/>
</dbReference>
<dbReference type="DrugBank" id="DB00313">
    <property type="generic name" value="Valproic acid"/>
</dbReference>
<dbReference type="DrugCentral" id="Q07869"/>
<dbReference type="GuidetoPHARMACOLOGY" id="593"/>
<dbReference type="SwissLipids" id="SLP:000001644"/>
<dbReference type="TCDB" id="9.B.208.1.6">
    <property type="family name" value="the vitamin d3 receptor (vdr) family"/>
</dbReference>
<dbReference type="iPTMnet" id="Q07869"/>
<dbReference type="PhosphoSitePlus" id="Q07869"/>
<dbReference type="BioMuta" id="PPARA"/>
<dbReference type="DMDM" id="3041727"/>
<dbReference type="jPOST" id="Q07869"/>
<dbReference type="MassIVE" id="Q07869"/>
<dbReference type="PaxDb" id="9606-ENSP00000385523"/>
<dbReference type="PeptideAtlas" id="Q07869"/>
<dbReference type="Antibodypedia" id="13823">
    <property type="antibodies" value="803 antibodies from 39 providers"/>
</dbReference>
<dbReference type="DNASU" id="5465"/>
<dbReference type="Ensembl" id="ENST00000402126.2">
    <molecule id="Q07869-1"/>
    <property type="protein sequence ID" value="ENSP00000385246.1"/>
    <property type="gene ID" value="ENSG00000186951.17"/>
</dbReference>
<dbReference type="Ensembl" id="ENST00000407236.6">
    <molecule id="Q07869-1"/>
    <property type="protein sequence ID" value="ENSP00000385523.1"/>
    <property type="gene ID" value="ENSG00000186951.17"/>
</dbReference>
<dbReference type="GeneID" id="5465"/>
<dbReference type="KEGG" id="hsa:5465"/>
<dbReference type="MANE-Select" id="ENST00000407236.6">
    <property type="protein sequence ID" value="ENSP00000385523.1"/>
    <property type="RefSeq nucleotide sequence ID" value="NM_005036.6"/>
    <property type="RefSeq protein sequence ID" value="NP_005027.2"/>
</dbReference>
<dbReference type="UCSC" id="uc003bgx.1">
    <molecule id="Q07869-1"/>
    <property type="organism name" value="human"/>
</dbReference>
<dbReference type="AGR" id="HGNC:9232"/>
<dbReference type="CTD" id="5465"/>
<dbReference type="DisGeNET" id="5465"/>
<dbReference type="GeneCards" id="PPARA"/>
<dbReference type="HGNC" id="HGNC:9232">
    <property type="gene designation" value="PPARA"/>
</dbReference>
<dbReference type="HPA" id="ENSG00000186951">
    <property type="expression patterns" value="Tissue enhanced (tongue)"/>
</dbReference>
<dbReference type="MalaCards" id="PPARA"/>
<dbReference type="MIM" id="170998">
    <property type="type" value="gene+phenotype"/>
</dbReference>
<dbReference type="neXtProt" id="NX_Q07869"/>
<dbReference type="OpenTargets" id="ENSG00000186951"/>
<dbReference type="PharmGKB" id="PA280"/>
<dbReference type="VEuPathDB" id="HostDB:ENSG00000186951"/>
<dbReference type="eggNOG" id="KOG3575">
    <property type="taxonomic scope" value="Eukaryota"/>
</dbReference>
<dbReference type="GeneTree" id="ENSGT00940000157097"/>
<dbReference type="HOGENOM" id="CLU_007368_4_1_1"/>
<dbReference type="InParanoid" id="Q07869"/>
<dbReference type="OMA" id="TNHPDNI"/>
<dbReference type="OrthoDB" id="7634782at2759"/>
<dbReference type="PAN-GO" id="Q07869">
    <property type="GO annotations" value="12 GO annotations based on evolutionary models"/>
</dbReference>
<dbReference type="PhylomeDB" id="Q07869"/>
<dbReference type="TreeFam" id="TF316304"/>
<dbReference type="PathwayCommons" id="Q07869"/>
<dbReference type="Reactome" id="R-HSA-1368082">
    <property type="pathway name" value="RORA activates gene expression"/>
</dbReference>
<dbReference type="Reactome" id="R-HSA-1368108">
    <property type="pathway name" value="BMAL1:CLOCK,NPAS2 activates circadian gene expression"/>
</dbReference>
<dbReference type="Reactome" id="R-HSA-1989781">
    <property type="pathway name" value="PPARA activates gene expression"/>
</dbReference>
<dbReference type="Reactome" id="R-HSA-2151201">
    <property type="pathway name" value="Transcriptional activation of mitochondrial biogenesis"/>
</dbReference>
<dbReference type="Reactome" id="R-HSA-2426168">
    <property type="pathway name" value="Activation of gene expression by SREBF (SREBP)"/>
</dbReference>
<dbReference type="Reactome" id="R-HSA-381340">
    <property type="pathway name" value="Transcriptional regulation of white adipocyte differentiation"/>
</dbReference>
<dbReference type="Reactome" id="R-HSA-383280">
    <property type="pathway name" value="Nuclear Receptor transcription pathway"/>
</dbReference>
<dbReference type="Reactome" id="R-HSA-400206">
    <property type="pathway name" value="Regulation of lipid metabolism by PPARalpha"/>
</dbReference>
<dbReference type="Reactome" id="R-HSA-400253">
    <property type="pathway name" value="Circadian Clock"/>
</dbReference>
<dbReference type="Reactome" id="R-HSA-4090294">
    <property type="pathway name" value="SUMOylation of intracellular receptors"/>
</dbReference>
<dbReference type="Reactome" id="R-HSA-9707564">
    <property type="pathway name" value="Cytoprotection by HMOX1"/>
</dbReference>
<dbReference type="Reactome" id="R-HSA-9707616">
    <property type="pathway name" value="Heme signaling"/>
</dbReference>
<dbReference type="Reactome" id="R-HSA-9844594">
    <property type="pathway name" value="Transcriptional regulation of brown and beige adipocyte differentiation by EBF2"/>
</dbReference>
<dbReference type="SignaLink" id="Q07869"/>
<dbReference type="SIGNOR" id="Q07869"/>
<dbReference type="BioGRID-ORCS" id="5465">
    <property type="hits" value="13 hits in 1190 CRISPR screens"/>
</dbReference>
<dbReference type="CD-CODE" id="8C2F96ED">
    <property type="entry name" value="Centrosome"/>
</dbReference>
<dbReference type="ChiTaRS" id="PPARA">
    <property type="organism name" value="human"/>
</dbReference>
<dbReference type="EvolutionaryTrace" id="Q07869"/>
<dbReference type="GeneWiki" id="Peroxisome_proliferator-activated_receptor_alpha"/>
<dbReference type="GenomeRNAi" id="5465"/>
<dbReference type="Pharos" id="Q07869">
    <property type="development level" value="Tclin"/>
</dbReference>
<dbReference type="PRO" id="PR:Q07869"/>
<dbReference type="Proteomes" id="UP000005640">
    <property type="component" value="Chromosome 22"/>
</dbReference>
<dbReference type="RNAct" id="Q07869">
    <property type="molecule type" value="protein"/>
</dbReference>
<dbReference type="Bgee" id="ENSG00000186951">
    <property type="expression patterns" value="Expressed in renal medulla and 181 other cell types or tissues"/>
</dbReference>
<dbReference type="ExpressionAtlas" id="Q07869">
    <property type="expression patterns" value="baseline and differential"/>
</dbReference>
<dbReference type="GO" id="GO:0000785">
    <property type="term" value="C:chromatin"/>
    <property type="evidence" value="ECO:0000247"/>
    <property type="project" value="NTNU_SB"/>
</dbReference>
<dbReference type="GO" id="GO:0005654">
    <property type="term" value="C:nucleoplasm"/>
    <property type="evidence" value="ECO:0000304"/>
    <property type="project" value="Reactome"/>
</dbReference>
<dbReference type="GO" id="GO:0005634">
    <property type="term" value="C:nucleus"/>
    <property type="evidence" value="ECO:0000314"/>
    <property type="project" value="BHF-UCL"/>
</dbReference>
<dbReference type="GO" id="GO:0003677">
    <property type="term" value="F:DNA binding"/>
    <property type="evidence" value="ECO:0000304"/>
    <property type="project" value="ProtInc"/>
</dbReference>
<dbReference type="GO" id="GO:0001216">
    <property type="term" value="F:DNA-binding transcription activator activity"/>
    <property type="evidence" value="ECO:0000314"/>
    <property type="project" value="UniProt"/>
</dbReference>
<dbReference type="GO" id="GO:0001228">
    <property type="term" value="F:DNA-binding transcription activator activity, RNA polymerase II-specific"/>
    <property type="evidence" value="ECO:0000314"/>
    <property type="project" value="NTNU_SB"/>
</dbReference>
<dbReference type="GO" id="GO:0003700">
    <property type="term" value="F:DNA-binding transcription factor activity"/>
    <property type="evidence" value="ECO:0000314"/>
    <property type="project" value="BHF-UCL"/>
</dbReference>
<dbReference type="GO" id="GO:0000981">
    <property type="term" value="F:DNA-binding transcription factor activity, RNA polymerase II-specific"/>
    <property type="evidence" value="ECO:0000247"/>
    <property type="project" value="NTNU_SB"/>
</dbReference>
<dbReference type="GO" id="GO:0001227">
    <property type="term" value="F:DNA-binding transcription repressor activity, RNA polymerase II-specific"/>
    <property type="evidence" value="ECO:0000314"/>
    <property type="project" value="NTNU_SB"/>
</dbReference>
<dbReference type="GO" id="GO:0008289">
    <property type="term" value="F:lipid binding"/>
    <property type="evidence" value="ECO:0000314"/>
    <property type="project" value="UniProtKB"/>
</dbReference>
<dbReference type="GO" id="GO:0097371">
    <property type="term" value="F:MDM2/MDM4 family protein binding"/>
    <property type="evidence" value="ECO:0007669"/>
    <property type="project" value="Ensembl"/>
</dbReference>
<dbReference type="GO" id="GO:0031435">
    <property type="term" value="F:mitogen-activated protein kinase kinase kinase binding"/>
    <property type="evidence" value="ECO:0007669"/>
    <property type="project" value="Ensembl"/>
</dbReference>
<dbReference type="GO" id="GO:0051525">
    <property type="term" value="F:NFAT protein binding"/>
    <property type="evidence" value="ECO:0007669"/>
    <property type="project" value="Ensembl"/>
</dbReference>
<dbReference type="GO" id="GO:0004879">
    <property type="term" value="F:nuclear receptor activity"/>
    <property type="evidence" value="ECO:0000314"/>
    <property type="project" value="UniProtKB"/>
</dbReference>
<dbReference type="GO" id="GO:0003707">
    <property type="term" value="F:nuclear steroid receptor activity"/>
    <property type="evidence" value="ECO:0000314"/>
    <property type="project" value="BHF-UCL"/>
</dbReference>
<dbReference type="GO" id="GO:0019902">
    <property type="term" value="F:phosphatase binding"/>
    <property type="evidence" value="ECO:0007669"/>
    <property type="project" value="Ensembl"/>
</dbReference>
<dbReference type="GO" id="GO:0019904">
    <property type="term" value="F:protein domain specific binding"/>
    <property type="evidence" value="ECO:0007669"/>
    <property type="project" value="Ensembl"/>
</dbReference>
<dbReference type="GO" id="GO:0044877">
    <property type="term" value="F:protein-containing complex binding"/>
    <property type="evidence" value="ECO:0007669"/>
    <property type="project" value="Ensembl"/>
</dbReference>
<dbReference type="GO" id="GO:0000978">
    <property type="term" value="F:RNA polymerase II cis-regulatory region sequence-specific DNA binding"/>
    <property type="evidence" value="ECO:0000314"/>
    <property type="project" value="NTNU_SB"/>
</dbReference>
<dbReference type="GO" id="GO:0061629">
    <property type="term" value="F:RNA polymerase II-specific DNA-binding transcription factor binding"/>
    <property type="evidence" value="ECO:0000353"/>
    <property type="project" value="BHF-UCL"/>
</dbReference>
<dbReference type="GO" id="GO:0043565">
    <property type="term" value="F:sequence-specific DNA binding"/>
    <property type="evidence" value="ECO:0000250"/>
    <property type="project" value="BHF-UCL"/>
</dbReference>
<dbReference type="GO" id="GO:0001223">
    <property type="term" value="F:transcription coactivator binding"/>
    <property type="evidence" value="ECO:0007669"/>
    <property type="project" value="Ensembl"/>
</dbReference>
<dbReference type="GO" id="GO:0031624">
    <property type="term" value="F:ubiquitin conjugating enzyme binding"/>
    <property type="evidence" value="ECO:0000353"/>
    <property type="project" value="BHF-UCL"/>
</dbReference>
<dbReference type="GO" id="GO:0008270">
    <property type="term" value="F:zinc ion binding"/>
    <property type="evidence" value="ECO:0007669"/>
    <property type="project" value="UniProtKB-KW"/>
</dbReference>
<dbReference type="GO" id="GO:0035095">
    <property type="term" value="P:behavioral response to nicotine"/>
    <property type="evidence" value="ECO:0007669"/>
    <property type="project" value="Ensembl"/>
</dbReference>
<dbReference type="GO" id="GO:0030154">
    <property type="term" value="P:cell differentiation"/>
    <property type="evidence" value="ECO:0000318"/>
    <property type="project" value="GO_Central"/>
</dbReference>
<dbReference type="GO" id="GO:0071332">
    <property type="term" value="P:cellular response to fructose stimulus"/>
    <property type="evidence" value="ECO:0007669"/>
    <property type="project" value="Ensembl"/>
</dbReference>
<dbReference type="GO" id="GO:0009267">
    <property type="term" value="P:cellular response to starvation"/>
    <property type="evidence" value="ECO:0000250"/>
    <property type="project" value="ARUK-UCL"/>
</dbReference>
<dbReference type="GO" id="GO:0032922">
    <property type="term" value="P:circadian regulation of gene expression"/>
    <property type="evidence" value="ECO:0000250"/>
    <property type="project" value="UniProtKB"/>
</dbReference>
<dbReference type="GO" id="GO:0070166">
    <property type="term" value="P:enamel mineralization"/>
    <property type="evidence" value="ECO:0007669"/>
    <property type="project" value="Ensembl"/>
</dbReference>
<dbReference type="GO" id="GO:0008544">
    <property type="term" value="P:epidermis development"/>
    <property type="evidence" value="ECO:0007669"/>
    <property type="project" value="Ensembl"/>
</dbReference>
<dbReference type="GO" id="GO:0006631">
    <property type="term" value="P:fatty acid metabolic process"/>
    <property type="evidence" value="ECO:0000318"/>
    <property type="project" value="GO_Central"/>
</dbReference>
<dbReference type="GO" id="GO:0010467">
    <property type="term" value="P:gene expression"/>
    <property type="evidence" value="ECO:0007669"/>
    <property type="project" value="Ensembl"/>
</dbReference>
<dbReference type="GO" id="GO:0006094">
    <property type="term" value="P:gluconeogenesis"/>
    <property type="evidence" value="ECO:0007669"/>
    <property type="project" value="Ensembl"/>
</dbReference>
<dbReference type="GO" id="GO:0007507">
    <property type="term" value="P:heart development"/>
    <property type="evidence" value="ECO:0007669"/>
    <property type="project" value="Ensembl"/>
</dbReference>
<dbReference type="GO" id="GO:0009755">
    <property type="term" value="P:hormone-mediated signaling pathway"/>
    <property type="evidence" value="ECO:0000318"/>
    <property type="project" value="GO_Central"/>
</dbReference>
<dbReference type="GO" id="GO:0030522">
    <property type="term" value="P:intracellular receptor signaling pathway"/>
    <property type="evidence" value="ECO:0000318"/>
    <property type="project" value="GO_Central"/>
</dbReference>
<dbReference type="GO" id="GO:0042157">
    <property type="term" value="P:lipoprotein metabolic process"/>
    <property type="evidence" value="ECO:0007669"/>
    <property type="project" value="Ensembl"/>
</dbReference>
<dbReference type="GO" id="GO:0032099">
    <property type="term" value="P:negative regulation of appetite"/>
    <property type="evidence" value="ECO:0000250"/>
    <property type="project" value="UniProtKB"/>
</dbReference>
<dbReference type="GO" id="GO:0045776">
    <property type="term" value="P:negative regulation of blood pressure"/>
    <property type="evidence" value="ECO:0007669"/>
    <property type="project" value="Ensembl"/>
</dbReference>
<dbReference type="GO" id="GO:0061052">
    <property type="term" value="P:negative regulation of cell growth involved in cardiac muscle cell development"/>
    <property type="evidence" value="ECO:0007669"/>
    <property type="project" value="Ensembl"/>
</dbReference>
<dbReference type="GO" id="GO:0010887">
    <property type="term" value="P:negative regulation of cholesterol storage"/>
    <property type="evidence" value="ECO:0000314"/>
    <property type="project" value="BHF-UCL"/>
</dbReference>
<dbReference type="GO" id="GO:1900016">
    <property type="term" value="P:negative regulation of cytokine production involved in inflammatory response"/>
    <property type="evidence" value="ECO:0000315"/>
    <property type="project" value="ARUK-UCL"/>
</dbReference>
<dbReference type="GO" id="GO:0045820">
    <property type="term" value="P:negative regulation of glycolytic process"/>
    <property type="evidence" value="ECO:0000314"/>
    <property type="project" value="BHF-UCL"/>
</dbReference>
<dbReference type="GO" id="GO:1903944">
    <property type="term" value="P:negative regulation of hepatocyte apoptotic process"/>
    <property type="evidence" value="ECO:0000315"/>
    <property type="project" value="ARUK-UCL"/>
</dbReference>
<dbReference type="GO" id="GO:0050728">
    <property type="term" value="P:negative regulation of inflammatory response"/>
    <property type="evidence" value="ECO:0000314"/>
    <property type="project" value="BHF-UCL"/>
</dbReference>
<dbReference type="GO" id="GO:1903038">
    <property type="term" value="P:negative regulation of leukocyte cell-cell adhesion"/>
    <property type="evidence" value="ECO:0000314"/>
    <property type="project" value="BHF-UCL"/>
</dbReference>
<dbReference type="GO" id="GO:0010745">
    <property type="term" value="P:negative regulation of macrophage derived foam cell differentiation"/>
    <property type="evidence" value="ECO:0000314"/>
    <property type="project" value="BHF-UCL"/>
</dbReference>
<dbReference type="GO" id="GO:1902894">
    <property type="term" value="P:negative regulation of miRNA transcription"/>
    <property type="evidence" value="ECO:0000314"/>
    <property type="project" value="BHF-UCL"/>
</dbReference>
<dbReference type="GO" id="GO:0051898">
    <property type="term" value="P:negative regulation of phosphatidylinositol 3-kinase/protein kinase B signal transduction"/>
    <property type="evidence" value="ECO:0000315"/>
    <property type="project" value="ARUK-UCL"/>
</dbReference>
<dbReference type="GO" id="GO:1903427">
    <property type="term" value="P:negative regulation of reactive oxygen species biosynthetic process"/>
    <property type="evidence" value="ECO:0000315"/>
    <property type="project" value="ARUK-UCL"/>
</dbReference>
<dbReference type="GO" id="GO:0000122">
    <property type="term" value="P:negative regulation of transcription by RNA polymerase II"/>
    <property type="evidence" value="ECO:0000314"/>
    <property type="project" value="BHF-UCL"/>
</dbReference>
<dbReference type="GO" id="GO:0030512">
    <property type="term" value="P:negative regulation of transforming growth factor beta receptor signaling pathway"/>
    <property type="evidence" value="ECO:0000314"/>
    <property type="project" value="ARUK-UCL"/>
</dbReference>
<dbReference type="GO" id="GO:0046209">
    <property type="term" value="P:nitric oxide metabolic process"/>
    <property type="evidence" value="ECO:0007669"/>
    <property type="project" value="Ensembl"/>
</dbReference>
<dbReference type="GO" id="GO:0035357">
    <property type="term" value="P:peroxisome proliferator activated receptor signaling pathway"/>
    <property type="evidence" value="ECO:0000314"/>
    <property type="project" value="UniProt"/>
</dbReference>
<dbReference type="GO" id="GO:2001171">
    <property type="term" value="P:positive regulation of ATP biosynthetic process"/>
    <property type="evidence" value="ECO:0000315"/>
    <property type="project" value="ARUK-UCL"/>
</dbReference>
<dbReference type="GO" id="GO:0045893">
    <property type="term" value="P:positive regulation of DNA-templated transcription"/>
    <property type="evidence" value="ECO:0000314"/>
    <property type="project" value="UniProtKB"/>
</dbReference>
<dbReference type="GO" id="GO:0032000">
    <property type="term" value="P:positive regulation of fatty acid beta-oxidation"/>
    <property type="evidence" value="ECO:0000304"/>
    <property type="project" value="UniProtKB"/>
</dbReference>
<dbReference type="GO" id="GO:0045923">
    <property type="term" value="P:positive regulation of fatty acid metabolic process"/>
    <property type="evidence" value="ECO:0000318"/>
    <property type="project" value="GO_Central"/>
</dbReference>
<dbReference type="GO" id="GO:0046321">
    <property type="term" value="P:positive regulation of fatty acid oxidation"/>
    <property type="evidence" value="ECO:0000250"/>
    <property type="project" value="BHF-UCL"/>
</dbReference>
<dbReference type="GO" id="GO:0045722">
    <property type="term" value="P:positive regulation of gluconeogenesis"/>
    <property type="evidence" value="ECO:0007669"/>
    <property type="project" value="Ensembl"/>
</dbReference>
<dbReference type="GO" id="GO:0046889">
    <property type="term" value="P:positive regulation of lipid biosynthetic process"/>
    <property type="evidence" value="ECO:0000315"/>
    <property type="project" value="ARUK-UCL"/>
</dbReference>
<dbReference type="GO" id="GO:0045944">
    <property type="term" value="P:positive regulation of transcription by RNA polymerase II"/>
    <property type="evidence" value="ECO:0000314"/>
    <property type="project" value="BHF-UCL"/>
</dbReference>
<dbReference type="GO" id="GO:1904189">
    <property type="term" value="P:positive regulation of transformation of host cell by virus"/>
    <property type="evidence" value="ECO:0000315"/>
    <property type="project" value="ARUK-UCL"/>
</dbReference>
<dbReference type="GO" id="GO:0042752">
    <property type="term" value="P:regulation of circadian rhythm"/>
    <property type="evidence" value="ECO:0000250"/>
    <property type="project" value="UniProtKB"/>
</dbReference>
<dbReference type="GO" id="GO:0019217">
    <property type="term" value="P:regulation of fatty acid metabolic process"/>
    <property type="evidence" value="ECO:0000314"/>
    <property type="project" value="BHF-UCL"/>
</dbReference>
<dbReference type="GO" id="GO:2000191">
    <property type="term" value="P:regulation of fatty acid transport"/>
    <property type="evidence" value="ECO:0000304"/>
    <property type="project" value="UniProtKB"/>
</dbReference>
<dbReference type="GO" id="GO:0010565">
    <property type="term" value="P:regulation of ketone metabolic process"/>
    <property type="evidence" value="ECO:0000314"/>
    <property type="project" value="BHF-UCL"/>
</dbReference>
<dbReference type="GO" id="GO:0045471">
    <property type="term" value="P:response to ethanol"/>
    <property type="evidence" value="ECO:0007669"/>
    <property type="project" value="Ensembl"/>
</dbReference>
<dbReference type="GO" id="GO:0001666">
    <property type="term" value="P:response to hypoxia"/>
    <property type="evidence" value="ECO:0007669"/>
    <property type="project" value="Ensembl"/>
</dbReference>
<dbReference type="GO" id="GO:0032868">
    <property type="term" value="P:response to insulin"/>
    <property type="evidence" value="ECO:0007669"/>
    <property type="project" value="Ensembl"/>
</dbReference>
<dbReference type="GO" id="GO:0007584">
    <property type="term" value="P:response to nutrient"/>
    <property type="evidence" value="ECO:0007669"/>
    <property type="project" value="Ensembl"/>
</dbReference>
<dbReference type="GO" id="GO:0042060">
    <property type="term" value="P:wound healing"/>
    <property type="evidence" value="ECO:0007669"/>
    <property type="project" value="Ensembl"/>
</dbReference>
<dbReference type="CDD" id="cd06965">
    <property type="entry name" value="NR_DBD_Ppar"/>
    <property type="match status" value="1"/>
</dbReference>
<dbReference type="CDD" id="cd06932">
    <property type="entry name" value="NR_LBD_PPAR"/>
    <property type="match status" value="1"/>
</dbReference>
<dbReference type="FunFam" id="1.10.565.10:FF:000013">
    <property type="entry name" value="Peroxisome proliferator-activated receptor delta"/>
    <property type="match status" value="1"/>
</dbReference>
<dbReference type="FunFam" id="3.30.50.10:FF:000010">
    <property type="entry name" value="Peroxisome proliferator-activated receptor gamma"/>
    <property type="match status" value="1"/>
</dbReference>
<dbReference type="Gene3D" id="3.30.50.10">
    <property type="entry name" value="Erythroid Transcription Factor GATA-1, subunit A"/>
    <property type="match status" value="1"/>
</dbReference>
<dbReference type="Gene3D" id="1.10.565.10">
    <property type="entry name" value="Retinoid X Receptor"/>
    <property type="match status" value="1"/>
</dbReference>
<dbReference type="IDEAL" id="IID00382"/>
<dbReference type="InterPro" id="IPR003074">
    <property type="entry name" value="1Cnucl_rcpt"/>
</dbReference>
<dbReference type="InterPro" id="IPR035500">
    <property type="entry name" value="NHR-like_dom_sf"/>
</dbReference>
<dbReference type="InterPro" id="IPR000536">
    <property type="entry name" value="Nucl_hrmn_rcpt_lig-bd"/>
</dbReference>
<dbReference type="InterPro" id="IPR050234">
    <property type="entry name" value="Nuclear_hormone_rcpt_NR1"/>
</dbReference>
<dbReference type="InterPro" id="IPR001723">
    <property type="entry name" value="Nuclear_hrmn_rcpt"/>
</dbReference>
<dbReference type="InterPro" id="IPR003076">
    <property type="entry name" value="PPAR-alpha"/>
</dbReference>
<dbReference type="InterPro" id="IPR001628">
    <property type="entry name" value="Znf_hrmn_rcpt"/>
</dbReference>
<dbReference type="InterPro" id="IPR013088">
    <property type="entry name" value="Znf_NHR/GATA"/>
</dbReference>
<dbReference type="PANTHER" id="PTHR24082">
    <property type="entry name" value="NUCLEAR HORMONE RECEPTOR"/>
    <property type="match status" value="1"/>
</dbReference>
<dbReference type="PANTHER" id="PTHR24082:SF197">
    <property type="entry name" value="PEROXISOME PROLIFERATOR-ACTIVATED RECEPTOR ALPHA"/>
    <property type="match status" value="1"/>
</dbReference>
<dbReference type="Pfam" id="PF00104">
    <property type="entry name" value="Hormone_recep"/>
    <property type="match status" value="1"/>
</dbReference>
<dbReference type="Pfam" id="PF00105">
    <property type="entry name" value="zf-C4"/>
    <property type="match status" value="1"/>
</dbReference>
<dbReference type="PRINTS" id="PR01288">
    <property type="entry name" value="PROXISOMEPAR"/>
</dbReference>
<dbReference type="PRINTS" id="PR01289">
    <property type="entry name" value="PROXISOMPAAR"/>
</dbReference>
<dbReference type="PRINTS" id="PR00398">
    <property type="entry name" value="STRDHORMONER"/>
</dbReference>
<dbReference type="PRINTS" id="PR00047">
    <property type="entry name" value="STROIDFINGER"/>
</dbReference>
<dbReference type="SMART" id="SM00430">
    <property type="entry name" value="HOLI"/>
    <property type="match status" value="1"/>
</dbReference>
<dbReference type="SMART" id="SM00399">
    <property type="entry name" value="ZnF_C4"/>
    <property type="match status" value="1"/>
</dbReference>
<dbReference type="SUPFAM" id="SSF57716">
    <property type="entry name" value="Glucocorticoid receptor-like (DNA-binding domain)"/>
    <property type="match status" value="1"/>
</dbReference>
<dbReference type="SUPFAM" id="SSF48508">
    <property type="entry name" value="Nuclear receptor ligand-binding domain"/>
    <property type="match status" value="1"/>
</dbReference>
<dbReference type="PROSITE" id="PS51843">
    <property type="entry name" value="NR_LBD"/>
    <property type="match status" value="1"/>
</dbReference>
<dbReference type="PROSITE" id="PS00031">
    <property type="entry name" value="NUCLEAR_REC_DBD_1"/>
    <property type="match status" value="1"/>
</dbReference>
<dbReference type="PROSITE" id="PS51030">
    <property type="entry name" value="NUCLEAR_REC_DBD_2"/>
    <property type="match status" value="1"/>
</dbReference>
<protein>
    <recommendedName>
        <fullName>Peroxisome proliferator-activated receptor alpha</fullName>
        <shortName>PPAR-alpha</shortName>
    </recommendedName>
    <alternativeName>
        <fullName>Nuclear receptor subfamily 1 group C member 1</fullName>
    </alternativeName>
</protein>